<proteinExistence type="evidence at protein level"/>
<dbReference type="EMBL" id="D13267">
    <property type="protein sequence ID" value="BAA02526.1"/>
    <property type="molecule type" value="Genomic_DNA"/>
</dbReference>
<dbReference type="EMBL" id="U18997">
    <property type="protein sequence ID" value="AAA57986.1"/>
    <property type="molecule type" value="Genomic_DNA"/>
</dbReference>
<dbReference type="EMBL" id="U00096">
    <property type="protein sequence ID" value="AAC76217.1"/>
    <property type="molecule type" value="Genomic_DNA"/>
</dbReference>
<dbReference type="EMBL" id="AP009048">
    <property type="protein sequence ID" value="BAE77229.1"/>
    <property type="molecule type" value="Genomic_DNA"/>
</dbReference>
<dbReference type="PIR" id="JS0767">
    <property type="entry name" value="R5EC27"/>
</dbReference>
<dbReference type="RefSeq" id="NP_417652.1">
    <property type="nucleotide sequence ID" value="NC_000913.3"/>
</dbReference>
<dbReference type="RefSeq" id="WP_000940595.1">
    <property type="nucleotide sequence ID" value="NZ_STEB01000012.1"/>
</dbReference>
<dbReference type="PDB" id="2J28">
    <property type="method" value="EM"/>
    <property type="resolution" value="8.00 A"/>
    <property type="chains" value="W=2-85"/>
</dbReference>
<dbReference type="PDB" id="2RDO">
    <property type="method" value="EM"/>
    <property type="resolution" value="9.10 A"/>
    <property type="chains" value="W=2-85"/>
</dbReference>
<dbReference type="PDB" id="3BBX">
    <property type="method" value="EM"/>
    <property type="resolution" value="10.00 A"/>
    <property type="chains" value="W=2-85"/>
</dbReference>
<dbReference type="PDB" id="3J5L">
    <property type="method" value="EM"/>
    <property type="resolution" value="6.60 A"/>
    <property type="chains" value="W=7-85"/>
</dbReference>
<dbReference type="PDB" id="3J7Z">
    <property type="method" value="EM"/>
    <property type="resolution" value="3.90 A"/>
    <property type="chains" value="W=1-85"/>
</dbReference>
<dbReference type="PDB" id="3J8G">
    <property type="method" value="EM"/>
    <property type="resolution" value="5.00 A"/>
    <property type="chains" value="Y=1-85"/>
</dbReference>
<dbReference type="PDB" id="3J9Y">
    <property type="method" value="EM"/>
    <property type="resolution" value="3.90 A"/>
    <property type="chains" value="W=1-85"/>
</dbReference>
<dbReference type="PDB" id="3J9Z">
    <property type="method" value="EM"/>
    <property type="resolution" value="3.60 A"/>
    <property type="chains" value="LU=2-85"/>
</dbReference>
<dbReference type="PDB" id="3JA1">
    <property type="method" value="EM"/>
    <property type="resolution" value="3.60 A"/>
    <property type="chains" value="LY=2-85"/>
</dbReference>
<dbReference type="PDB" id="3JBU">
    <property type="method" value="EM"/>
    <property type="resolution" value="3.64 A"/>
    <property type="chains" value="y=1-85"/>
</dbReference>
<dbReference type="PDB" id="3JBV">
    <property type="method" value="EM"/>
    <property type="resolution" value="3.32 A"/>
    <property type="chains" value="y=1-85"/>
</dbReference>
<dbReference type="PDB" id="3JCD">
    <property type="method" value="EM"/>
    <property type="resolution" value="3.70 A"/>
    <property type="chains" value="W=1-85"/>
</dbReference>
<dbReference type="PDB" id="3JCE">
    <property type="method" value="EM"/>
    <property type="resolution" value="3.20 A"/>
    <property type="chains" value="W=1-85"/>
</dbReference>
<dbReference type="PDB" id="3JCJ">
    <property type="method" value="EM"/>
    <property type="resolution" value="3.70 A"/>
    <property type="chains" value="V=1-85"/>
</dbReference>
<dbReference type="PDB" id="3JCN">
    <property type="method" value="EM"/>
    <property type="resolution" value="4.60 A"/>
    <property type="chains" value="W=1-85"/>
</dbReference>
<dbReference type="PDB" id="4CSU">
    <property type="method" value="EM"/>
    <property type="resolution" value="5.50 A"/>
    <property type="chains" value="Y=2-85"/>
</dbReference>
<dbReference type="PDB" id="4U1U">
    <property type="method" value="X-ray"/>
    <property type="resolution" value="2.95 A"/>
    <property type="chains" value="BW/DW=10-85"/>
</dbReference>
<dbReference type="PDB" id="4U1V">
    <property type="method" value="X-ray"/>
    <property type="resolution" value="3.00 A"/>
    <property type="chains" value="BW/DW=10-85"/>
</dbReference>
<dbReference type="PDB" id="4U20">
    <property type="method" value="X-ray"/>
    <property type="resolution" value="2.90 A"/>
    <property type="chains" value="BW/DW=10-85"/>
</dbReference>
<dbReference type="PDB" id="4U24">
    <property type="method" value="X-ray"/>
    <property type="resolution" value="2.90 A"/>
    <property type="chains" value="BW/DW=10-85"/>
</dbReference>
<dbReference type="PDB" id="4U25">
    <property type="method" value="X-ray"/>
    <property type="resolution" value="2.90 A"/>
    <property type="chains" value="BW/DW=10-85"/>
</dbReference>
<dbReference type="PDB" id="4U26">
    <property type="method" value="X-ray"/>
    <property type="resolution" value="2.80 A"/>
    <property type="chains" value="BW/DW=10-85"/>
</dbReference>
<dbReference type="PDB" id="4U27">
    <property type="method" value="X-ray"/>
    <property type="resolution" value="2.80 A"/>
    <property type="chains" value="BW/DW=10-85"/>
</dbReference>
<dbReference type="PDB" id="4UY8">
    <property type="method" value="EM"/>
    <property type="resolution" value="3.80 A"/>
    <property type="chains" value="W=7-85"/>
</dbReference>
<dbReference type="PDB" id="4V47">
    <property type="method" value="EM"/>
    <property type="resolution" value="12.30 A"/>
    <property type="chains" value="AU=2-85"/>
</dbReference>
<dbReference type="PDB" id="4V48">
    <property type="method" value="EM"/>
    <property type="resolution" value="11.50 A"/>
    <property type="chains" value="AU=2-85"/>
</dbReference>
<dbReference type="PDB" id="4V4H">
    <property type="method" value="X-ray"/>
    <property type="resolution" value="3.46 A"/>
    <property type="chains" value="BW/DW=1-85"/>
</dbReference>
<dbReference type="PDB" id="4V4Q">
    <property type="method" value="X-ray"/>
    <property type="resolution" value="3.46 A"/>
    <property type="chains" value="BW/DW=2-85"/>
</dbReference>
<dbReference type="PDB" id="4V4V">
    <property type="method" value="EM"/>
    <property type="resolution" value="15.00 A"/>
    <property type="chains" value="BU=2-85"/>
</dbReference>
<dbReference type="PDB" id="4V4W">
    <property type="method" value="EM"/>
    <property type="resolution" value="15.00 A"/>
    <property type="chains" value="BU=2-85"/>
</dbReference>
<dbReference type="PDB" id="4V50">
    <property type="method" value="X-ray"/>
    <property type="resolution" value="3.22 A"/>
    <property type="chains" value="BW/DW=2-85"/>
</dbReference>
<dbReference type="PDB" id="4V52">
    <property type="method" value="X-ray"/>
    <property type="resolution" value="3.21 A"/>
    <property type="chains" value="BW/DW=2-85"/>
</dbReference>
<dbReference type="PDB" id="4V53">
    <property type="method" value="X-ray"/>
    <property type="resolution" value="3.54 A"/>
    <property type="chains" value="BW/DW=2-85"/>
</dbReference>
<dbReference type="PDB" id="4V54">
    <property type="method" value="X-ray"/>
    <property type="resolution" value="3.30 A"/>
    <property type="chains" value="BW/DW=2-85"/>
</dbReference>
<dbReference type="PDB" id="4V55">
    <property type="method" value="X-ray"/>
    <property type="resolution" value="4.00 A"/>
    <property type="chains" value="BW/DW=2-85"/>
</dbReference>
<dbReference type="PDB" id="4V56">
    <property type="method" value="X-ray"/>
    <property type="resolution" value="3.93 A"/>
    <property type="chains" value="BW/DW=2-85"/>
</dbReference>
<dbReference type="PDB" id="4V57">
    <property type="method" value="X-ray"/>
    <property type="resolution" value="3.50 A"/>
    <property type="chains" value="BW/DW=2-85"/>
</dbReference>
<dbReference type="PDB" id="4V5B">
    <property type="method" value="X-ray"/>
    <property type="resolution" value="3.74 A"/>
    <property type="chains" value="AW/CW=2-85"/>
</dbReference>
<dbReference type="PDB" id="4V5H">
    <property type="method" value="EM"/>
    <property type="resolution" value="5.80 A"/>
    <property type="chains" value="BY=7-85"/>
</dbReference>
<dbReference type="PDB" id="4V5Y">
    <property type="method" value="X-ray"/>
    <property type="resolution" value="4.45 A"/>
    <property type="chains" value="BW/DW=2-85"/>
</dbReference>
<dbReference type="PDB" id="4V64">
    <property type="method" value="X-ray"/>
    <property type="resolution" value="3.50 A"/>
    <property type="chains" value="BW/DW=2-85"/>
</dbReference>
<dbReference type="PDB" id="4V65">
    <property type="method" value="EM"/>
    <property type="resolution" value="9.00 A"/>
    <property type="chains" value="BP=1-85"/>
</dbReference>
<dbReference type="PDB" id="4V66">
    <property type="method" value="EM"/>
    <property type="resolution" value="9.00 A"/>
    <property type="chains" value="BP=1-85"/>
</dbReference>
<dbReference type="PDB" id="4V69">
    <property type="method" value="EM"/>
    <property type="resolution" value="6.70 A"/>
    <property type="chains" value="BW=7-85"/>
</dbReference>
<dbReference type="PDB" id="4V6C">
    <property type="method" value="X-ray"/>
    <property type="resolution" value="3.19 A"/>
    <property type="chains" value="BW/DW=1-85"/>
</dbReference>
<dbReference type="PDB" id="4V6D">
    <property type="method" value="X-ray"/>
    <property type="resolution" value="3.81 A"/>
    <property type="chains" value="BW/DW=1-85"/>
</dbReference>
<dbReference type="PDB" id="4V6E">
    <property type="method" value="X-ray"/>
    <property type="resolution" value="3.71 A"/>
    <property type="chains" value="BW/DW=1-85"/>
</dbReference>
<dbReference type="PDB" id="4V6K">
    <property type="method" value="EM"/>
    <property type="resolution" value="8.25 A"/>
    <property type="chains" value="AX=1-85"/>
</dbReference>
<dbReference type="PDB" id="4V6L">
    <property type="method" value="EM"/>
    <property type="resolution" value="13.20 A"/>
    <property type="chains" value="BX=1-85"/>
</dbReference>
<dbReference type="PDB" id="4V6M">
    <property type="method" value="EM"/>
    <property type="resolution" value="7.10 A"/>
    <property type="chains" value="BW=2-85"/>
</dbReference>
<dbReference type="PDB" id="4V6N">
    <property type="method" value="EM"/>
    <property type="resolution" value="12.10 A"/>
    <property type="chains" value="AY=2-85"/>
</dbReference>
<dbReference type="PDB" id="4V6O">
    <property type="method" value="EM"/>
    <property type="resolution" value="14.70 A"/>
    <property type="chains" value="BY=2-85"/>
</dbReference>
<dbReference type="PDB" id="4V6P">
    <property type="method" value="EM"/>
    <property type="resolution" value="13.50 A"/>
    <property type="chains" value="BY=2-85"/>
</dbReference>
<dbReference type="PDB" id="4V6Q">
    <property type="method" value="EM"/>
    <property type="resolution" value="11.50 A"/>
    <property type="chains" value="BY=2-85"/>
</dbReference>
<dbReference type="PDB" id="4V6R">
    <property type="method" value="EM"/>
    <property type="resolution" value="11.50 A"/>
    <property type="chains" value="BY=2-85"/>
</dbReference>
<dbReference type="PDB" id="4V6S">
    <property type="method" value="EM"/>
    <property type="resolution" value="13.10 A"/>
    <property type="chains" value="AY=2-85"/>
</dbReference>
<dbReference type="PDB" id="4V6T">
    <property type="method" value="EM"/>
    <property type="resolution" value="8.30 A"/>
    <property type="chains" value="BW=10-85"/>
</dbReference>
<dbReference type="PDB" id="4V6V">
    <property type="method" value="EM"/>
    <property type="resolution" value="9.80 A"/>
    <property type="chains" value="B0=2-85"/>
</dbReference>
<dbReference type="PDB" id="4V6Y">
    <property type="method" value="EM"/>
    <property type="resolution" value="12.00 A"/>
    <property type="chains" value="BW=7-85"/>
</dbReference>
<dbReference type="PDB" id="4V6Z">
    <property type="method" value="EM"/>
    <property type="resolution" value="12.00 A"/>
    <property type="chains" value="BW=7-85"/>
</dbReference>
<dbReference type="PDB" id="4V70">
    <property type="method" value="EM"/>
    <property type="resolution" value="17.00 A"/>
    <property type="chains" value="BW=7-85"/>
</dbReference>
<dbReference type="PDB" id="4V71">
    <property type="method" value="EM"/>
    <property type="resolution" value="20.00 A"/>
    <property type="chains" value="BW=7-85"/>
</dbReference>
<dbReference type="PDB" id="4V72">
    <property type="method" value="EM"/>
    <property type="resolution" value="13.00 A"/>
    <property type="chains" value="BW=7-85"/>
</dbReference>
<dbReference type="PDB" id="4V73">
    <property type="method" value="EM"/>
    <property type="resolution" value="15.00 A"/>
    <property type="chains" value="BW=7-85"/>
</dbReference>
<dbReference type="PDB" id="4V74">
    <property type="method" value="EM"/>
    <property type="resolution" value="17.00 A"/>
    <property type="chains" value="BW=7-85"/>
</dbReference>
<dbReference type="PDB" id="4V75">
    <property type="method" value="EM"/>
    <property type="resolution" value="12.00 A"/>
    <property type="chains" value="BW=7-85"/>
</dbReference>
<dbReference type="PDB" id="4V76">
    <property type="method" value="EM"/>
    <property type="resolution" value="17.00 A"/>
    <property type="chains" value="BW=7-85"/>
</dbReference>
<dbReference type="PDB" id="4V77">
    <property type="method" value="EM"/>
    <property type="resolution" value="17.00 A"/>
    <property type="chains" value="BW=7-85"/>
</dbReference>
<dbReference type="PDB" id="4V78">
    <property type="method" value="EM"/>
    <property type="resolution" value="20.00 A"/>
    <property type="chains" value="BW=7-85"/>
</dbReference>
<dbReference type="PDB" id="4V79">
    <property type="method" value="EM"/>
    <property type="resolution" value="15.00 A"/>
    <property type="chains" value="BW=7-85"/>
</dbReference>
<dbReference type="PDB" id="4V7A">
    <property type="method" value="EM"/>
    <property type="resolution" value="9.00 A"/>
    <property type="chains" value="BW=7-85"/>
</dbReference>
<dbReference type="PDB" id="4V7B">
    <property type="method" value="EM"/>
    <property type="resolution" value="6.80 A"/>
    <property type="chains" value="BW=1-85"/>
</dbReference>
<dbReference type="PDB" id="4V7C">
    <property type="method" value="EM"/>
    <property type="resolution" value="7.60 A"/>
    <property type="chains" value="BY=2-85"/>
</dbReference>
<dbReference type="PDB" id="4V7D">
    <property type="method" value="EM"/>
    <property type="resolution" value="7.60 A"/>
    <property type="chains" value="AZ=2-85"/>
</dbReference>
<dbReference type="PDB" id="4V7I">
    <property type="method" value="EM"/>
    <property type="resolution" value="9.60 A"/>
    <property type="chains" value="AW=1-85"/>
</dbReference>
<dbReference type="PDB" id="4V7S">
    <property type="method" value="X-ray"/>
    <property type="resolution" value="3.25 A"/>
    <property type="chains" value="BW/DW=7-85"/>
</dbReference>
<dbReference type="PDB" id="4V7T">
    <property type="method" value="X-ray"/>
    <property type="resolution" value="3.19 A"/>
    <property type="chains" value="BW/DW=7-85"/>
</dbReference>
<dbReference type="PDB" id="4V7U">
    <property type="method" value="X-ray"/>
    <property type="resolution" value="3.10 A"/>
    <property type="chains" value="BW/DW=7-85"/>
</dbReference>
<dbReference type="PDB" id="4V7V">
    <property type="method" value="X-ray"/>
    <property type="resolution" value="3.29 A"/>
    <property type="chains" value="BW/DW=7-85"/>
</dbReference>
<dbReference type="PDB" id="4V85">
    <property type="method" value="X-ray"/>
    <property type="resolution" value="3.20 A"/>
    <property type="chains" value="B0=1-85"/>
</dbReference>
<dbReference type="PDB" id="4V89">
    <property type="method" value="X-ray"/>
    <property type="resolution" value="3.70 A"/>
    <property type="chains" value="B0=1-85"/>
</dbReference>
<dbReference type="PDB" id="4V9C">
    <property type="method" value="X-ray"/>
    <property type="resolution" value="3.30 A"/>
    <property type="chains" value="BW/DW=1-85"/>
</dbReference>
<dbReference type="PDB" id="4V9D">
    <property type="method" value="X-ray"/>
    <property type="resolution" value="3.00 A"/>
    <property type="chains" value="CW=10-85, DW=11-85"/>
</dbReference>
<dbReference type="PDB" id="4V9O">
    <property type="method" value="X-ray"/>
    <property type="resolution" value="2.90 A"/>
    <property type="chains" value="AW/CW/EW/GW=1-85"/>
</dbReference>
<dbReference type="PDB" id="4V9P">
    <property type="method" value="X-ray"/>
    <property type="resolution" value="2.90 A"/>
    <property type="chains" value="AW/CW/EW/GW=1-85"/>
</dbReference>
<dbReference type="PDB" id="4WF1">
    <property type="method" value="X-ray"/>
    <property type="resolution" value="3.09 A"/>
    <property type="chains" value="BW/DW=10-85"/>
</dbReference>
<dbReference type="PDB" id="4WOI">
    <property type="method" value="X-ray"/>
    <property type="resolution" value="3.00 A"/>
    <property type="chains" value="BW/CW=1-85"/>
</dbReference>
<dbReference type="PDB" id="4WWW">
    <property type="method" value="X-ray"/>
    <property type="resolution" value="3.10 A"/>
    <property type="chains" value="RW/YW=7-85"/>
</dbReference>
<dbReference type="PDB" id="4YBB">
    <property type="method" value="X-ray"/>
    <property type="resolution" value="2.10 A"/>
    <property type="chains" value="CX/DX=10-85"/>
</dbReference>
<dbReference type="PDB" id="5ADY">
    <property type="method" value="EM"/>
    <property type="resolution" value="4.50 A"/>
    <property type="chains" value="W=1-85"/>
</dbReference>
<dbReference type="PDB" id="5AFI">
    <property type="method" value="EM"/>
    <property type="resolution" value="2.90 A"/>
    <property type="chains" value="W=1-85"/>
</dbReference>
<dbReference type="PDB" id="5AKA">
    <property type="method" value="EM"/>
    <property type="resolution" value="5.70 A"/>
    <property type="chains" value="W=2-85"/>
</dbReference>
<dbReference type="PDB" id="5GAD">
    <property type="method" value="EM"/>
    <property type="resolution" value="3.70 A"/>
    <property type="chains" value="X=1-85"/>
</dbReference>
<dbReference type="PDB" id="5GAE">
    <property type="method" value="EM"/>
    <property type="resolution" value="3.33 A"/>
    <property type="chains" value="X=1-85"/>
</dbReference>
<dbReference type="PDB" id="5GAF">
    <property type="method" value="EM"/>
    <property type="resolution" value="4.30 A"/>
    <property type="chains" value="X=10-85"/>
</dbReference>
<dbReference type="PDB" id="5GAG">
    <property type="method" value="EM"/>
    <property type="resolution" value="3.80 A"/>
    <property type="chains" value="X=1-85"/>
</dbReference>
<dbReference type="PDB" id="5GAH">
    <property type="method" value="EM"/>
    <property type="resolution" value="3.80 A"/>
    <property type="chains" value="X=1-85"/>
</dbReference>
<dbReference type="PDB" id="5H5U">
    <property type="method" value="EM"/>
    <property type="resolution" value="3.00 A"/>
    <property type="chains" value="X=2-85"/>
</dbReference>
<dbReference type="PDB" id="5IQR">
    <property type="method" value="EM"/>
    <property type="resolution" value="3.00 A"/>
    <property type="chains" value="W=1-85"/>
</dbReference>
<dbReference type="PDB" id="5IT8">
    <property type="method" value="X-ray"/>
    <property type="resolution" value="3.12 A"/>
    <property type="chains" value="CX/DX=10-85"/>
</dbReference>
<dbReference type="PDB" id="5J5B">
    <property type="method" value="X-ray"/>
    <property type="resolution" value="2.80 A"/>
    <property type="chains" value="CX/DX=10-85"/>
</dbReference>
<dbReference type="PDB" id="5J7L">
    <property type="method" value="X-ray"/>
    <property type="resolution" value="3.00 A"/>
    <property type="chains" value="CX/DX=10-85"/>
</dbReference>
<dbReference type="PDB" id="5J88">
    <property type="method" value="X-ray"/>
    <property type="resolution" value="3.32 A"/>
    <property type="chains" value="CX/DX=10-85"/>
</dbReference>
<dbReference type="PDB" id="5J8A">
    <property type="method" value="X-ray"/>
    <property type="resolution" value="3.10 A"/>
    <property type="chains" value="CX/DX=3-85"/>
</dbReference>
<dbReference type="PDB" id="5J91">
    <property type="method" value="X-ray"/>
    <property type="resolution" value="2.96 A"/>
    <property type="chains" value="CX/DX=10-85"/>
</dbReference>
<dbReference type="PDB" id="5JC9">
    <property type="method" value="X-ray"/>
    <property type="resolution" value="3.03 A"/>
    <property type="chains" value="CX/DX=10-85"/>
</dbReference>
<dbReference type="PDB" id="5JTE">
    <property type="method" value="EM"/>
    <property type="resolution" value="3.60 A"/>
    <property type="chains" value="BW=1-85"/>
</dbReference>
<dbReference type="PDB" id="5JU8">
    <property type="method" value="EM"/>
    <property type="resolution" value="3.60 A"/>
    <property type="chains" value="BW=1-85"/>
</dbReference>
<dbReference type="PDB" id="5KCR">
    <property type="method" value="EM"/>
    <property type="resolution" value="3.60 A"/>
    <property type="chains" value="10=1-85"/>
</dbReference>
<dbReference type="PDB" id="5KCS">
    <property type="method" value="EM"/>
    <property type="resolution" value="3.90 A"/>
    <property type="chains" value="10=1-85"/>
</dbReference>
<dbReference type="PDB" id="5KPS">
    <property type="method" value="EM"/>
    <property type="resolution" value="3.90 A"/>
    <property type="chains" value="W=1-85"/>
</dbReference>
<dbReference type="PDB" id="5KPV">
    <property type="method" value="EM"/>
    <property type="resolution" value="4.10 A"/>
    <property type="chains" value="V=1-85"/>
</dbReference>
<dbReference type="PDB" id="5KPW">
    <property type="method" value="EM"/>
    <property type="resolution" value="3.90 A"/>
    <property type="chains" value="V=1-85"/>
</dbReference>
<dbReference type="PDB" id="5KPX">
    <property type="method" value="EM"/>
    <property type="resolution" value="3.90 A"/>
    <property type="chains" value="V=1-85"/>
</dbReference>
<dbReference type="PDB" id="5L3P">
    <property type="method" value="EM"/>
    <property type="resolution" value="3.70 A"/>
    <property type="chains" value="0=1-85"/>
</dbReference>
<dbReference type="PDB" id="5LZA">
    <property type="method" value="EM"/>
    <property type="resolution" value="3.60 A"/>
    <property type="chains" value="W=11-85"/>
</dbReference>
<dbReference type="PDB" id="5LZB">
    <property type="method" value="EM"/>
    <property type="resolution" value="5.30 A"/>
    <property type="chains" value="W=11-85"/>
</dbReference>
<dbReference type="PDB" id="5LZC">
    <property type="method" value="EM"/>
    <property type="resolution" value="4.80 A"/>
    <property type="chains" value="W=11-85"/>
</dbReference>
<dbReference type="PDB" id="5LZD">
    <property type="method" value="EM"/>
    <property type="resolution" value="3.40 A"/>
    <property type="chains" value="W=11-85"/>
</dbReference>
<dbReference type="PDB" id="5LZE">
    <property type="method" value="EM"/>
    <property type="resolution" value="3.50 A"/>
    <property type="chains" value="W=11-85"/>
</dbReference>
<dbReference type="PDB" id="5LZF">
    <property type="method" value="EM"/>
    <property type="resolution" value="4.60 A"/>
    <property type="chains" value="W=11-85"/>
</dbReference>
<dbReference type="PDB" id="5MDV">
    <property type="method" value="EM"/>
    <property type="resolution" value="2.97 A"/>
    <property type="chains" value="W=1-85"/>
</dbReference>
<dbReference type="PDB" id="5MDW">
    <property type="method" value="EM"/>
    <property type="resolution" value="3.06 A"/>
    <property type="chains" value="W=1-85"/>
</dbReference>
<dbReference type="PDB" id="5MDY">
    <property type="method" value="EM"/>
    <property type="resolution" value="3.35 A"/>
    <property type="chains" value="W=1-85"/>
</dbReference>
<dbReference type="PDB" id="5MDZ">
    <property type="method" value="EM"/>
    <property type="resolution" value="3.10 A"/>
    <property type="chains" value="W=1-85"/>
</dbReference>
<dbReference type="PDB" id="5MGP">
    <property type="method" value="EM"/>
    <property type="resolution" value="3.10 A"/>
    <property type="chains" value="W=11-85"/>
</dbReference>
<dbReference type="PDB" id="5NCO">
    <property type="method" value="EM"/>
    <property type="resolution" value="4.80 A"/>
    <property type="chains" value="X=10-85"/>
</dbReference>
<dbReference type="PDB" id="5NP6">
    <property type="method" value="EM"/>
    <property type="resolution" value="3.60 A"/>
    <property type="chains" value="u=11-85"/>
</dbReference>
<dbReference type="PDB" id="5NWY">
    <property type="method" value="EM"/>
    <property type="resolution" value="2.93 A"/>
    <property type="chains" value="j=1-85"/>
</dbReference>
<dbReference type="PDB" id="5O2R">
    <property type="method" value="EM"/>
    <property type="resolution" value="3.40 A"/>
    <property type="chains" value="W=11-85"/>
</dbReference>
<dbReference type="PDB" id="5U4I">
    <property type="method" value="EM"/>
    <property type="resolution" value="3.50 A"/>
    <property type="chains" value="X=1-85"/>
</dbReference>
<dbReference type="PDB" id="5U9F">
    <property type="method" value="EM"/>
    <property type="resolution" value="3.20 A"/>
    <property type="chains" value="25=1-85"/>
</dbReference>
<dbReference type="PDB" id="5U9G">
    <property type="method" value="EM"/>
    <property type="resolution" value="3.20 A"/>
    <property type="chains" value="25=1-85"/>
</dbReference>
<dbReference type="PDB" id="5UYK">
    <property type="method" value="EM"/>
    <property type="resolution" value="3.90 A"/>
    <property type="chains" value="25=11-85"/>
</dbReference>
<dbReference type="PDB" id="5UYL">
    <property type="method" value="EM"/>
    <property type="resolution" value="3.60 A"/>
    <property type="chains" value="25=11-85"/>
</dbReference>
<dbReference type="PDB" id="5UYM">
    <property type="method" value="EM"/>
    <property type="resolution" value="3.20 A"/>
    <property type="chains" value="25=11-85"/>
</dbReference>
<dbReference type="PDB" id="5UYN">
    <property type="method" value="EM"/>
    <property type="resolution" value="4.00 A"/>
    <property type="chains" value="25=11-85"/>
</dbReference>
<dbReference type="PDB" id="5UYP">
    <property type="method" value="EM"/>
    <property type="resolution" value="3.90 A"/>
    <property type="chains" value="25=11-85"/>
</dbReference>
<dbReference type="PDB" id="5UYQ">
    <property type="method" value="EM"/>
    <property type="resolution" value="3.80 A"/>
    <property type="chains" value="25=11-85"/>
</dbReference>
<dbReference type="PDB" id="5WDT">
    <property type="method" value="EM"/>
    <property type="resolution" value="3.00 A"/>
    <property type="chains" value="W=10-84"/>
</dbReference>
<dbReference type="PDB" id="5WE4">
    <property type="method" value="EM"/>
    <property type="resolution" value="3.10 A"/>
    <property type="chains" value="W=10-84"/>
</dbReference>
<dbReference type="PDB" id="5WE6">
    <property type="method" value="EM"/>
    <property type="resolution" value="3.40 A"/>
    <property type="chains" value="W=10-84"/>
</dbReference>
<dbReference type="PDB" id="5WF0">
    <property type="method" value="EM"/>
    <property type="resolution" value="3.60 A"/>
    <property type="chains" value="W=10-84"/>
</dbReference>
<dbReference type="PDB" id="5WFK">
    <property type="method" value="EM"/>
    <property type="resolution" value="3.40 A"/>
    <property type="chains" value="W=10-84"/>
</dbReference>
<dbReference type="PDB" id="5WFS">
    <property type="method" value="EM"/>
    <property type="resolution" value="3.00 A"/>
    <property type="chains" value="W=10-84"/>
</dbReference>
<dbReference type="PDB" id="6BU8">
    <property type="method" value="EM"/>
    <property type="resolution" value="3.50 A"/>
    <property type="chains" value="25=11-85"/>
</dbReference>
<dbReference type="PDB" id="6BY1">
    <property type="method" value="X-ray"/>
    <property type="resolution" value="3.94 A"/>
    <property type="chains" value="CW/DW=11-85"/>
</dbReference>
<dbReference type="PDB" id="6C4H">
    <property type="method" value="EM"/>
    <property type="resolution" value="3.10 A"/>
    <property type="chains" value="X=1-85"/>
</dbReference>
<dbReference type="PDB" id="6C4I">
    <property type="method" value="EM"/>
    <property type="resolution" value="3.24 A"/>
    <property type="chains" value="X=1-85"/>
</dbReference>
<dbReference type="PDB" id="6DNC">
    <property type="method" value="EM"/>
    <property type="resolution" value="3.70 A"/>
    <property type="chains" value="AA=1-85"/>
</dbReference>
<dbReference type="PDB" id="6ENF">
    <property type="method" value="EM"/>
    <property type="resolution" value="3.20 A"/>
    <property type="chains" value="W=8-85"/>
</dbReference>
<dbReference type="PDB" id="6ENJ">
    <property type="method" value="EM"/>
    <property type="resolution" value="3.70 A"/>
    <property type="chains" value="W=2-85"/>
</dbReference>
<dbReference type="PDB" id="6ENU">
    <property type="method" value="EM"/>
    <property type="resolution" value="3.10 A"/>
    <property type="chains" value="W=8-85"/>
</dbReference>
<dbReference type="PDB" id="6GBZ">
    <property type="method" value="EM"/>
    <property type="resolution" value="3.80 A"/>
    <property type="chains" value="W=10-85"/>
</dbReference>
<dbReference type="PDB" id="6GC0">
    <property type="method" value="EM"/>
    <property type="resolution" value="3.80 A"/>
    <property type="chains" value="W=10-85"/>
</dbReference>
<dbReference type="PDB" id="6GC4">
    <property type="method" value="EM"/>
    <property type="resolution" value="4.30 A"/>
    <property type="chains" value="W=10-85"/>
</dbReference>
<dbReference type="PDB" id="6GC8">
    <property type="method" value="EM"/>
    <property type="resolution" value="3.80 A"/>
    <property type="chains" value="W=10-85"/>
</dbReference>
<dbReference type="PDB" id="6GWT">
    <property type="method" value="EM"/>
    <property type="resolution" value="3.80 A"/>
    <property type="chains" value="W=11-85"/>
</dbReference>
<dbReference type="PDB" id="6GXM">
    <property type="method" value="EM"/>
    <property type="resolution" value="3.80 A"/>
    <property type="chains" value="W=11-85"/>
</dbReference>
<dbReference type="PDB" id="6GXN">
    <property type="method" value="EM"/>
    <property type="resolution" value="3.90 A"/>
    <property type="chains" value="W=11-85"/>
</dbReference>
<dbReference type="PDB" id="6GXO">
    <property type="method" value="EM"/>
    <property type="resolution" value="3.90 A"/>
    <property type="chains" value="W=11-85"/>
</dbReference>
<dbReference type="PDB" id="6GXP">
    <property type="method" value="EM"/>
    <property type="resolution" value="4.40 A"/>
    <property type="chains" value="W=11-85"/>
</dbReference>
<dbReference type="PDB" id="6H4N">
    <property type="method" value="EM"/>
    <property type="resolution" value="3.00 A"/>
    <property type="chains" value="W=11-85"/>
</dbReference>
<dbReference type="PDB" id="6H58">
    <property type="method" value="EM"/>
    <property type="resolution" value="7.90 A"/>
    <property type="chains" value="W/WW=11-85"/>
</dbReference>
<dbReference type="PDB" id="6HRM">
    <property type="method" value="EM"/>
    <property type="resolution" value="2.96 A"/>
    <property type="chains" value="W=10-85"/>
</dbReference>
<dbReference type="PDB" id="6I0Y">
    <property type="method" value="EM"/>
    <property type="resolution" value="3.20 A"/>
    <property type="chains" value="W=7-85"/>
</dbReference>
<dbReference type="PDB" id="6I7V">
    <property type="method" value="X-ray"/>
    <property type="resolution" value="2.90 A"/>
    <property type="chains" value="CX/DX=10-85"/>
</dbReference>
<dbReference type="PDB" id="6O9J">
    <property type="method" value="EM"/>
    <property type="resolution" value="3.90 A"/>
    <property type="chains" value="W=2-85"/>
</dbReference>
<dbReference type="PDB" id="6O9K">
    <property type="method" value="EM"/>
    <property type="resolution" value="4.00 A"/>
    <property type="chains" value="0=7-85"/>
</dbReference>
<dbReference type="PDB" id="6OFX">
    <property type="method" value="EM"/>
    <property type="resolution" value="3.30 A"/>
    <property type="chains" value="w=11-85"/>
</dbReference>
<dbReference type="PDB" id="6OG7">
    <property type="method" value="EM"/>
    <property type="resolution" value="3.30 A"/>
    <property type="chains" value="w=11-85"/>
</dbReference>
<dbReference type="PDB" id="6OGF">
    <property type="method" value="EM"/>
    <property type="resolution" value="3.90 A"/>
    <property type="chains" value="w=1-85"/>
</dbReference>
<dbReference type="PDB" id="6OGG">
    <property type="method" value="EM"/>
    <property type="resolution" value="4.20 A"/>
    <property type="chains" value="w=1-85"/>
</dbReference>
<dbReference type="PDB" id="6OGI">
    <property type="method" value="EM"/>
    <property type="resolution" value="3.40 A"/>
    <property type="chains" value="w=1-85"/>
</dbReference>
<dbReference type="PDB" id="6OM6">
    <property type="method" value="EM"/>
    <property type="resolution" value="3.10 A"/>
    <property type="chains" value="W=1-85"/>
</dbReference>
<dbReference type="PDB" id="6ORE">
    <property type="method" value="EM"/>
    <property type="resolution" value="2.90 A"/>
    <property type="chains" value="W=10-85"/>
</dbReference>
<dbReference type="PDB" id="6ORL">
    <property type="method" value="EM"/>
    <property type="resolution" value="3.50 A"/>
    <property type="chains" value="W=10-85"/>
</dbReference>
<dbReference type="PDB" id="6OSK">
    <property type="method" value="EM"/>
    <property type="resolution" value="3.60 A"/>
    <property type="chains" value="W=10-85"/>
</dbReference>
<dbReference type="PDB" id="6OSQ">
    <property type="method" value="EM"/>
    <property type="resolution" value="3.50 A"/>
    <property type="chains" value="W=10-85"/>
</dbReference>
<dbReference type="PDB" id="6OST">
    <property type="method" value="EM"/>
    <property type="resolution" value="4.20 A"/>
    <property type="chains" value="W=10-85"/>
</dbReference>
<dbReference type="PDB" id="6OT3">
    <property type="method" value="EM"/>
    <property type="resolution" value="3.90 A"/>
    <property type="chains" value="W=10-85"/>
</dbReference>
<dbReference type="PDB" id="6OUO">
    <property type="method" value="EM"/>
    <property type="resolution" value="3.70 A"/>
    <property type="chains" value="W=10-85"/>
</dbReference>
<dbReference type="PDB" id="6PJ6">
    <property type="method" value="EM"/>
    <property type="resolution" value="2.20 A"/>
    <property type="chains" value="e=11-85"/>
</dbReference>
<dbReference type="PDB" id="6Q97">
    <property type="method" value="EM"/>
    <property type="resolution" value="3.90 A"/>
    <property type="chains" value="W=10-85"/>
</dbReference>
<dbReference type="PDB" id="6Q98">
    <property type="method" value="EM"/>
    <property type="resolution" value="4.30 A"/>
    <property type="chains" value="W=1-85"/>
</dbReference>
<dbReference type="PDB" id="6Q9A">
    <property type="method" value="EM"/>
    <property type="resolution" value="3.70 A"/>
    <property type="chains" value="W=10-84"/>
</dbReference>
<dbReference type="PDB" id="6QDW">
    <property type="method" value="EM"/>
    <property type="resolution" value="2.83 A"/>
    <property type="chains" value="y=1-85"/>
</dbReference>
<dbReference type="PDB" id="6QUL">
    <property type="method" value="EM"/>
    <property type="resolution" value="3.00 A"/>
    <property type="chains" value="X=1-85"/>
</dbReference>
<dbReference type="PDB" id="6S0K">
    <property type="method" value="EM"/>
    <property type="resolution" value="3.10 A"/>
    <property type="chains" value="X=1-85"/>
</dbReference>
<dbReference type="PDB" id="6SZS">
    <property type="method" value="EM"/>
    <property type="resolution" value="3.06 A"/>
    <property type="chains" value="W=1-85"/>
</dbReference>
<dbReference type="PDB" id="6TBV">
    <property type="method" value="EM"/>
    <property type="resolution" value="2.70 A"/>
    <property type="chains" value="L271=1-85"/>
</dbReference>
<dbReference type="PDB" id="6TC3">
    <property type="method" value="EM"/>
    <property type="resolution" value="2.70 A"/>
    <property type="chains" value="L271=1-85"/>
</dbReference>
<dbReference type="PDB" id="6U48">
    <property type="method" value="EM"/>
    <property type="resolution" value="2.87 A"/>
    <property type="chains" value="CX=11-85"/>
</dbReference>
<dbReference type="PDB" id="6VU3">
    <property type="method" value="EM"/>
    <property type="resolution" value="3.70 A"/>
    <property type="chains" value="b=10-85"/>
</dbReference>
<dbReference type="PDB" id="6VWL">
    <property type="method" value="EM"/>
    <property type="resolution" value="3.10 A"/>
    <property type="chains" value="U=1-85"/>
</dbReference>
<dbReference type="PDB" id="6VWM">
    <property type="method" value="EM"/>
    <property type="resolution" value="3.40 A"/>
    <property type="chains" value="U=1-85"/>
</dbReference>
<dbReference type="PDB" id="6VWN">
    <property type="method" value="EM"/>
    <property type="resolution" value="3.40 A"/>
    <property type="chains" value="U=1-85"/>
</dbReference>
<dbReference type="PDB" id="6VYQ">
    <property type="method" value="EM"/>
    <property type="resolution" value="3.70 A"/>
    <property type="chains" value="b=1-85"/>
</dbReference>
<dbReference type="PDB" id="6VYR">
    <property type="method" value="EM"/>
    <property type="resolution" value="3.80 A"/>
    <property type="chains" value="b=1-85"/>
</dbReference>
<dbReference type="PDB" id="6VYS">
    <property type="method" value="EM"/>
    <property type="resolution" value="3.70 A"/>
    <property type="chains" value="b=1-85"/>
</dbReference>
<dbReference type="PDB" id="6VYT">
    <property type="method" value="EM"/>
    <property type="resolution" value="14.00 A"/>
    <property type="chains" value="b=1-85"/>
</dbReference>
<dbReference type="PDB" id="6VYU">
    <property type="method" value="EM"/>
    <property type="resolution" value="7.00 A"/>
    <property type="chains" value="b=1-85"/>
</dbReference>
<dbReference type="PDB" id="6VYW">
    <property type="method" value="EM"/>
    <property type="resolution" value="7.00 A"/>
    <property type="chains" value="b=10-85"/>
</dbReference>
<dbReference type="PDB" id="6VYX">
    <property type="method" value="EM"/>
    <property type="resolution" value="9.90 A"/>
    <property type="chains" value="b=1-85"/>
</dbReference>
<dbReference type="PDB" id="6VYY">
    <property type="method" value="EM"/>
    <property type="resolution" value="9.90 A"/>
    <property type="chains" value="b=1-85"/>
</dbReference>
<dbReference type="PDB" id="6VYZ">
    <property type="method" value="EM"/>
    <property type="resolution" value="9.90 A"/>
    <property type="chains" value="b=1-85"/>
</dbReference>
<dbReference type="PDB" id="6VZ2">
    <property type="method" value="EM"/>
    <property type="resolution" value="10.00 A"/>
    <property type="chains" value="b=1-85"/>
</dbReference>
<dbReference type="PDB" id="6VZ3">
    <property type="method" value="EM"/>
    <property type="resolution" value="8.90 A"/>
    <property type="chains" value="b=10-85"/>
</dbReference>
<dbReference type="PDB" id="6VZ5">
    <property type="method" value="EM"/>
    <property type="resolution" value="8.90 A"/>
    <property type="chains" value="b=1-85"/>
</dbReference>
<dbReference type="PDB" id="6VZ7">
    <property type="method" value="EM"/>
    <property type="resolution" value="7.00 A"/>
    <property type="chains" value="b=10-85"/>
</dbReference>
<dbReference type="PDB" id="6VZJ">
    <property type="method" value="EM"/>
    <property type="resolution" value="4.10 A"/>
    <property type="chains" value="b=10-85"/>
</dbReference>
<dbReference type="PDB" id="6WD0">
    <property type="method" value="EM"/>
    <property type="resolution" value="3.00 A"/>
    <property type="chains" value="w=11-85"/>
</dbReference>
<dbReference type="PDB" id="6WD1">
    <property type="method" value="EM"/>
    <property type="resolution" value="3.30 A"/>
    <property type="chains" value="w=11-85"/>
</dbReference>
<dbReference type="PDB" id="6WD2">
    <property type="method" value="EM"/>
    <property type="resolution" value="3.60 A"/>
    <property type="chains" value="w=11-85"/>
</dbReference>
<dbReference type="PDB" id="6WD3">
    <property type="method" value="EM"/>
    <property type="resolution" value="3.60 A"/>
    <property type="chains" value="w=11-85"/>
</dbReference>
<dbReference type="PDB" id="6WD4">
    <property type="method" value="EM"/>
    <property type="resolution" value="3.70 A"/>
    <property type="chains" value="w=11-85"/>
</dbReference>
<dbReference type="PDB" id="6WD5">
    <property type="method" value="EM"/>
    <property type="resolution" value="3.60 A"/>
    <property type="chains" value="w=11-85"/>
</dbReference>
<dbReference type="PDB" id="6WD6">
    <property type="method" value="EM"/>
    <property type="resolution" value="3.70 A"/>
    <property type="chains" value="w=11-85"/>
</dbReference>
<dbReference type="PDB" id="6WD7">
    <property type="method" value="EM"/>
    <property type="resolution" value="3.90 A"/>
    <property type="chains" value="w=11-85"/>
</dbReference>
<dbReference type="PDB" id="6WD8">
    <property type="method" value="EM"/>
    <property type="resolution" value="3.70 A"/>
    <property type="chains" value="w=11-85"/>
</dbReference>
<dbReference type="PDB" id="6WD9">
    <property type="method" value="EM"/>
    <property type="resolution" value="3.70 A"/>
    <property type="chains" value="w=11-85"/>
</dbReference>
<dbReference type="PDB" id="6WDA">
    <property type="method" value="EM"/>
    <property type="resolution" value="3.80 A"/>
    <property type="chains" value="w=11-85"/>
</dbReference>
<dbReference type="PDB" id="6WDB">
    <property type="method" value="EM"/>
    <property type="resolution" value="4.00 A"/>
    <property type="chains" value="w=11-85"/>
</dbReference>
<dbReference type="PDB" id="6WDC">
    <property type="method" value="EM"/>
    <property type="resolution" value="4.20 A"/>
    <property type="chains" value="w=11-85"/>
</dbReference>
<dbReference type="PDB" id="6WDD">
    <property type="method" value="EM"/>
    <property type="resolution" value="3.20 A"/>
    <property type="chains" value="w=11-85"/>
</dbReference>
<dbReference type="PDB" id="6WDE">
    <property type="method" value="EM"/>
    <property type="resolution" value="3.00 A"/>
    <property type="chains" value="w=11-85"/>
</dbReference>
<dbReference type="PDB" id="6WDF">
    <property type="method" value="EM"/>
    <property type="resolution" value="3.30 A"/>
    <property type="chains" value="w=11-85"/>
</dbReference>
<dbReference type="PDB" id="6WDG">
    <property type="method" value="EM"/>
    <property type="resolution" value="3.30 A"/>
    <property type="chains" value="w=11-85"/>
</dbReference>
<dbReference type="PDB" id="6WDH">
    <property type="method" value="EM"/>
    <property type="resolution" value="4.30 A"/>
    <property type="chains" value="w=11-85"/>
</dbReference>
<dbReference type="PDB" id="6WDI">
    <property type="method" value="EM"/>
    <property type="resolution" value="4.00 A"/>
    <property type="chains" value="w=11-85"/>
</dbReference>
<dbReference type="PDB" id="6WDJ">
    <property type="method" value="EM"/>
    <property type="resolution" value="3.70 A"/>
    <property type="chains" value="w=11-85"/>
</dbReference>
<dbReference type="PDB" id="6WDK">
    <property type="method" value="EM"/>
    <property type="resolution" value="3.60 A"/>
    <property type="chains" value="w=11-85"/>
</dbReference>
<dbReference type="PDB" id="6WDL">
    <property type="method" value="EM"/>
    <property type="resolution" value="3.70 A"/>
    <property type="chains" value="w=11-85"/>
</dbReference>
<dbReference type="PDB" id="6WDM">
    <property type="method" value="EM"/>
    <property type="resolution" value="3.60 A"/>
    <property type="chains" value="w=11-85"/>
</dbReference>
<dbReference type="PDB" id="6WNT">
    <property type="method" value="EM"/>
    <property type="resolution" value="3.10 A"/>
    <property type="chains" value="w=11-85"/>
</dbReference>
<dbReference type="PDB" id="6WNV">
    <property type="method" value="EM"/>
    <property type="resolution" value="3.50 A"/>
    <property type="chains" value="w=11-85"/>
</dbReference>
<dbReference type="PDB" id="6WNW">
    <property type="method" value="EM"/>
    <property type="resolution" value="3.20 A"/>
    <property type="chains" value="w=11-85"/>
</dbReference>
<dbReference type="PDB" id="6X6T">
    <property type="method" value="EM"/>
    <property type="resolution" value="3.20 A"/>
    <property type="chains" value="b=1-85"/>
</dbReference>
<dbReference type="PDB" id="6X7F">
    <property type="method" value="EM"/>
    <property type="resolution" value="3.50 A"/>
    <property type="chains" value="b=1-85"/>
</dbReference>
<dbReference type="PDB" id="6X7K">
    <property type="method" value="EM"/>
    <property type="resolution" value="3.10 A"/>
    <property type="chains" value="b=1-85"/>
</dbReference>
<dbReference type="PDB" id="6X9Q">
    <property type="method" value="EM"/>
    <property type="resolution" value="4.80 A"/>
    <property type="chains" value="b=1-85"/>
</dbReference>
<dbReference type="PDB" id="6XDQ">
    <property type="method" value="EM"/>
    <property type="resolution" value="3.70 A"/>
    <property type="chains" value="b=1-85"/>
</dbReference>
<dbReference type="PDB" id="6XDR">
    <property type="method" value="EM"/>
    <property type="resolution" value="4.70 A"/>
    <property type="chains" value="b=1-85"/>
</dbReference>
<dbReference type="PDB" id="6XGF">
    <property type="method" value="EM"/>
    <property type="resolution" value="5.00 A"/>
    <property type="chains" value="b=1-85"/>
</dbReference>
<dbReference type="PDB" id="6XII">
    <property type="method" value="EM"/>
    <property type="resolution" value="7.00 A"/>
    <property type="chains" value="b=1-85"/>
</dbReference>
<dbReference type="PDB" id="6XIJ">
    <property type="method" value="EM"/>
    <property type="resolution" value="8.00 A"/>
    <property type="chains" value="b=1-85"/>
</dbReference>
<dbReference type="PDB" id="6XZ7">
    <property type="method" value="EM"/>
    <property type="resolution" value="2.10 A"/>
    <property type="chains" value="W=10-85"/>
</dbReference>
<dbReference type="PDB" id="6XZA">
    <property type="method" value="EM"/>
    <property type="resolution" value="2.66 A"/>
    <property type="chains" value="W2=10-85"/>
</dbReference>
<dbReference type="PDB" id="6XZB">
    <property type="method" value="EM"/>
    <property type="resolution" value="2.54 A"/>
    <property type="chains" value="W2=10-85"/>
</dbReference>
<dbReference type="PDB" id="6Y69">
    <property type="method" value="EM"/>
    <property type="resolution" value="2.86 A"/>
    <property type="chains" value="W=11-85"/>
</dbReference>
<dbReference type="PDB" id="6YS3">
    <property type="method" value="EM"/>
    <property type="resolution" value="2.58 A"/>
    <property type="chains" value="y=1-85"/>
</dbReference>
<dbReference type="PDB" id="6YSR">
    <property type="method" value="EM"/>
    <property type="resolution" value="3.10 A"/>
    <property type="chains" value="W=1-85"/>
</dbReference>
<dbReference type="PDB" id="6YSS">
    <property type="method" value="EM"/>
    <property type="resolution" value="2.60 A"/>
    <property type="chains" value="W=1-85"/>
</dbReference>
<dbReference type="PDB" id="6YST">
    <property type="method" value="EM"/>
    <property type="resolution" value="3.20 A"/>
    <property type="chains" value="W=1-85"/>
</dbReference>
<dbReference type="PDB" id="6YSU">
    <property type="method" value="EM"/>
    <property type="resolution" value="3.70 A"/>
    <property type="chains" value="W=1-85"/>
</dbReference>
<dbReference type="PDB" id="6ZTJ">
    <property type="method" value="EM"/>
    <property type="resolution" value="3.40 A"/>
    <property type="chains" value="BX=1-85"/>
</dbReference>
<dbReference type="PDB" id="6ZTL">
    <property type="method" value="EM"/>
    <property type="resolution" value="3.50 A"/>
    <property type="chains" value="BX=1-85"/>
</dbReference>
<dbReference type="PDB" id="6ZTM">
    <property type="method" value="EM"/>
    <property type="resolution" value="3.30 A"/>
    <property type="chains" value="BX=1-85"/>
</dbReference>
<dbReference type="PDB" id="6ZTN">
    <property type="method" value="EM"/>
    <property type="resolution" value="3.90 A"/>
    <property type="chains" value="BX=1-85"/>
</dbReference>
<dbReference type="PDB" id="6ZTO">
    <property type="method" value="EM"/>
    <property type="resolution" value="3.00 A"/>
    <property type="chains" value="BX=1-85"/>
</dbReference>
<dbReference type="PDB" id="6ZTP">
    <property type="method" value="EM"/>
    <property type="resolution" value="3.00 A"/>
    <property type="chains" value="BX=1-85"/>
</dbReference>
<dbReference type="PDB" id="6ZU1">
    <property type="method" value="EM"/>
    <property type="resolution" value="3.00 A"/>
    <property type="chains" value="BX=1-85"/>
</dbReference>
<dbReference type="PDB" id="7AC7">
    <property type="method" value="EM"/>
    <property type="resolution" value="3.08 A"/>
    <property type="chains" value="A=2-85"/>
</dbReference>
<dbReference type="PDB" id="7ACJ">
    <property type="method" value="EM"/>
    <property type="resolution" value="3.20 A"/>
    <property type="chains" value="A=7-85"/>
</dbReference>
<dbReference type="PDB" id="7ACR">
    <property type="method" value="EM"/>
    <property type="resolution" value="3.44 A"/>
    <property type="chains" value="A=10-85"/>
</dbReference>
<dbReference type="PDB" id="7B5K">
    <property type="method" value="EM"/>
    <property type="resolution" value="2.90 A"/>
    <property type="chains" value="W=10-85"/>
</dbReference>
<dbReference type="PDB" id="7BL2">
    <property type="method" value="EM"/>
    <property type="resolution" value="3.70 A"/>
    <property type="chains" value="W=1-85"/>
</dbReference>
<dbReference type="PDB" id="7BL3">
    <property type="method" value="EM"/>
    <property type="resolution" value="3.50 A"/>
    <property type="chains" value="W=1-85"/>
</dbReference>
<dbReference type="PDB" id="7BL4">
    <property type="method" value="EM"/>
    <property type="resolution" value="2.40 A"/>
    <property type="chains" value="W=1-85"/>
</dbReference>
<dbReference type="PDB" id="7BL5">
    <property type="method" value="EM"/>
    <property type="resolution" value="3.30 A"/>
    <property type="chains" value="W=1-85"/>
</dbReference>
<dbReference type="PDB" id="7BL6">
    <property type="method" value="EM"/>
    <property type="resolution" value="4.00 A"/>
    <property type="chains" value="W=1-85"/>
</dbReference>
<dbReference type="PDB" id="7BV8">
    <property type="method" value="EM"/>
    <property type="resolution" value="3.14 A"/>
    <property type="chains" value="X=1-85"/>
</dbReference>
<dbReference type="PDB" id="7D6Z">
    <property type="method" value="EM"/>
    <property type="resolution" value="3.40 A"/>
    <property type="chains" value="W=1-85"/>
</dbReference>
<dbReference type="PDB" id="7D80">
    <property type="method" value="EM"/>
    <property type="resolution" value="4.10 A"/>
    <property type="chains" value="u=1-85"/>
</dbReference>
<dbReference type="PDB" id="7JSS">
    <property type="method" value="EM"/>
    <property type="resolution" value="3.70 A"/>
    <property type="chains" value="w=11-85"/>
</dbReference>
<dbReference type="PDB" id="7JSW">
    <property type="method" value="EM"/>
    <property type="resolution" value="3.80 A"/>
    <property type="chains" value="w=11-85"/>
</dbReference>
<dbReference type="PDB" id="7JSZ">
    <property type="method" value="EM"/>
    <property type="resolution" value="3.70 A"/>
    <property type="chains" value="w=11-85"/>
</dbReference>
<dbReference type="PDB" id="7JT1">
    <property type="method" value="EM"/>
    <property type="resolution" value="3.30 A"/>
    <property type="chains" value="w=11-85"/>
</dbReference>
<dbReference type="PDB" id="7JT2">
    <property type="method" value="EM"/>
    <property type="resolution" value="3.50 A"/>
    <property type="chains" value="w=11-85"/>
</dbReference>
<dbReference type="PDB" id="7JT3">
    <property type="method" value="EM"/>
    <property type="resolution" value="3.70 A"/>
    <property type="chains" value="w=11-85"/>
</dbReference>
<dbReference type="PDB" id="7K00">
    <property type="method" value="EM"/>
    <property type="resolution" value="1.98 A"/>
    <property type="chains" value="v=1-85"/>
</dbReference>
<dbReference type="PDB" id="7K50">
    <property type="method" value="EM"/>
    <property type="resolution" value="3.40 A"/>
    <property type="chains" value="w=11-85"/>
</dbReference>
<dbReference type="PDB" id="7K51">
    <property type="method" value="EM"/>
    <property type="resolution" value="3.50 A"/>
    <property type="chains" value="w=11-85"/>
</dbReference>
<dbReference type="PDB" id="7K52">
    <property type="method" value="EM"/>
    <property type="resolution" value="3.40 A"/>
    <property type="chains" value="w=11-85"/>
</dbReference>
<dbReference type="PDB" id="7K53">
    <property type="method" value="EM"/>
    <property type="resolution" value="3.20 A"/>
    <property type="chains" value="w=11-85"/>
</dbReference>
<dbReference type="PDB" id="7K54">
    <property type="method" value="EM"/>
    <property type="resolution" value="3.20 A"/>
    <property type="chains" value="w=11-85"/>
</dbReference>
<dbReference type="PDB" id="7K55">
    <property type="method" value="EM"/>
    <property type="resolution" value="3.30 A"/>
    <property type="chains" value="w=11-85"/>
</dbReference>
<dbReference type="PDB" id="7LV0">
    <property type="method" value="EM"/>
    <property type="resolution" value="3.20 A"/>
    <property type="chains" value="w=11-85"/>
</dbReference>
<dbReference type="PDB" id="7LVK">
    <property type="method" value="EM"/>
    <property type="resolution" value="2.20 A"/>
    <property type="chains" value="e=1-85"/>
</dbReference>
<dbReference type="PDB" id="7M5D">
    <property type="method" value="EM"/>
    <property type="resolution" value="2.80 A"/>
    <property type="chains" value="W=10-85"/>
</dbReference>
<dbReference type="PDB" id="7N1P">
    <property type="method" value="EM"/>
    <property type="resolution" value="2.33 A"/>
    <property type="chains" value="La=1-85"/>
</dbReference>
<dbReference type="PDB" id="7N2C">
    <property type="method" value="EM"/>
    <property type="resolution" value="2.72 A"/>
    <property type="chains" value="La=1-85"/>
</dbReference>
<dbReference type="PDB" id="7N2U">
    <property type="method" value="EM"/>
    <property type="resolution" value="2.53 A"/>
    <property type="chains" value="La=1-85"/>
</dbReference>
<dbReference type="PDB" id="7N2V">
    <property type="method" value="EM"/>
    <property type="resolution" value="2.54 A"/>
    <property type="chains" value="La=1-85"/>
</dbReference>
<dbReference type="PDB" id="7N30">
    <property type="method" value="EM"/>
    <property type="resolution" value="2.66 A"/>
    <property type="chains" value="La=1-85"/>
</dbReference>
<dbReference type="PDB" id="7N31">
    <property type="method" value="EM"/>
    <property type="resolution" value="2.69 A"/>
    <property type="chains" value="La=1-85"/>
</dbReference>
<dbReference type="PDB" id="7NBU">
    <property type="method" value="EM"/>
    <property type="resolution" value="3.11 A"/>
    <property type="chains" value="v=2-85"/>
</dbReference>
<dbReference type="PDB" id="7NWT">
    <property type="method" value="EM"/>
    <property type="resolution" value="2.66 A"/>
    <property type="chains" value="W=1-85"/>
</dbReference>
<dbReference type="PDB" id="7O19">
    <property type="method" value="EM"/>
    <property type="resolution" value="2.90 A"/>
    <property type="chains" value="BW=1-85"/>
</dbReference>
<dbReference type="PDB" id="7O1A">
    <property type="method" value="EM"/>
    <property type="resolution" value="2.40 A"/>
    <property type="chains" value="BW=1-85"/>
</dbReference>
<dbReference type="PDB" id="7O1C">
    <property type="method" value="EM"/>
    <property type="resolution" value="2.60 A"/>
    <property type="chains" value="BW=1-85"/>
</dbReference>
<dbReference type="PDB" id="7OIZ">
    <property type="method" value="EM"/>
    <property type="resolution" value="2.90 A"/>
    <property type="chains" value="v=1-85"/>
</dbReference>
<dbReference type="PDB" id="7OJ0">
    <property type="method" value="EM"/>
    <property type="resolution" value="3.50 A"/>
    <property type="chains" value="v=1-85"/>
</dbReference>
<dbReference type="PDB" id="7P3K">
    <property type="method" value="EM"/>
    <property type="resolution" value="2.90 A"/>
    <property type="chains" value="v=1-85"/>
</dbReference>
<dbReference type="PDB" id="7PJS">
    <property type="method" value="EM"/>
    <property type="resolution" value="2.35 A"/>
    <property type="chains" value="W=1-85"/>
</dbReference>
<dbReference type="PDB" id="7PJT">
    <property type="method" value="EM"/>
    <property type="resolution" value="6.00 A"/>
    <property type="chains" value="W=1-85"/>
</dbReference>
<dbReference type="PDB" id="7PJU">
    <property type="method" value="EM"/>
    <property type="resolution" value="9.50 A"/>
    <property type="chains" value="W=1-85"/>
</dbReference>
<dbReference type="PDB" id="7PJV">
    <property type="method" value="EM"/>
    <property type="resolution" value="3.10 A"/>
    <property type="chains" value="W=1-85"/>
</dbReference>
<dbReference type="PDB" id="7PJW">
    <property type="method" value="EM"/>
    <property type="resolution" value="4.00 A"/>
    <property type="chains" value="W=1-85"/>
</dbReference>
<dbReference type="PDB" id="7PJX">
    <property type="method" value="EM"/>
    <property type="resolution" value="6.50 A"/>
    <property type="chains" value="W=1-85"/>
</dbReference>
<dbReference type="PDB" id="7PJY">
    <property type="method" value="EM"/>
    <property type="resolution" value="3.10 A"/>
    <property type="chains" value="W=1-85"/>
</dbReference>
<dbReference type="PDB" id="7PJZ">
    <property type="method" value="EM"/>
    <property type="resolution" value="6.00 A"/>
    <property type="chains" value="W=1-85"/>
</dbReference>
<dbReference type="PDB" id="7Q4K">
    <property type="method" value="EM"/>
    <property type="resolution" value="3.00 A"/>
    <property type="chains" value="BW=1-85"/>
</dbReference>
<dbReference type="PDB" id="7QG8">
    <property type="method" value="EM"/>
    <property type="resolution" value="3.97 A"/>
    <property type="chains" value="j=1-85"/>
</dbReference>
<dbReference type="PDB" id="7QGH">
    <property type="method" value="EM"/>
    <property type="resolution" value="4.48 A"/>
    <property type="chains" value="j=1-85"/>
</dbReference>
<dbReference type="PDB" id="7QGN">
    <property type="method" value="EM"/>
    <property type="resolution" value="3.37 A"/>
    <property type="chains" value="j=1-85"/>
</dbReference>
<dbReference type="PDB" id="7QGR">
    <property type="method" value="EM"/>
    <property type="resolution" value="5.70 A"/>
    <property type="chains" value="j=1-85"/>
</dbReference>
<dbReference type="PDB" id="7QQ3">
    <property type="method" value="EM"/>
    <property type="resolution" value="2.10 A"/>
    <property type="chains" value="e=1-85"/>
</dbReference>
<dbReference type="PDB" id="7S1G">
    <property type="method" value="EM"/>
    <property type="resolution" value="2.48 A"/>
    <property type="chains" value="e=1-85"/>
</dbReference>
<dbReference type="PDB" id="7S1H">
    <property type="method" value="EM"/>
    <property type="resolution" value="2.35 A"/>
    <property type="chains" value="e=1-85"/>
</dbReference>
<dbReference type="PDB" id="7S1I">
    <property type="method" value="EM"/>
    <property type="resolution" value="2.48 A"/>
    <property type="chains" value="e=1-85"/>
</dbReference>
<dbReference type="PDB" id="7S1J">
    <property type="method" value="EM"/>
    <property type="resolution" value="2.47 A"/>
    <property type="chains" value="e=1-85"/>
</dbReference>
<dbReference type="PDB" id="7S1K">
    <property type="method" value="EM"/>
    <property type="resolution" value="2.42 A"/>
    <property type="chains" value="e=1-85"/>
</dbReference>
<dbReference type="PDB" id="7SA4">
    <property type="method" value="EM"/>
    <property type="resolution" value="2.55 A"/>
    <property type="chains" value="W=1-85"/>
</dbReference>
<dbReference type="PDB" id="7SS9">
    <property type="method" value="EM"/>
    <property type="resolution" value="3.90 A"/>
    <property type="chains" value="w=11-85"/>
</dbReference>
<dbReference type="PDB" id="7SSD">
    <property type="method" value="EM"/>
    <property type="resolution" value="3.30 A"/>
    <property type="chains" value="w=11-85"/>
</dbReference>
<dbReference type="PDB" id="7SSL">
    <property type="method" value="EM"/>
    <property type="resolution" value="3.80 A"/>
    <property type="chains" value="w=11-85"/>
</dbReference>
<dbReference type="PDB" id="7SSN">
    <property type="method" value="EM"/>
    <property type="resolution" value="3.20 A"/>
    <property type="chains" value="w=11-85"/>
</dbReference>
<dbReference type="PDB" id="7SSO">
    <property type="method" value="EM"/>
    <property type="resolution" value="3.20 A"/>
    <property type="chains" value="w=11-85"/>
</dbReference>
<dbReference type="PDB" id="7SSW">
    <property type="method" value="EM"/>
    <property type="resolution" value="3.80 A"/>
    <property type="chains" value="w=11-85"/>
</dbReference>
<dbReference type="PDB" id="7ST2">
    <property type="method" value="EM"/>
    <property type="resolution" value="2.90 A"/>
    <property type="chains" value="w=11-85"/>
</dbReference>
<dbReference type="PDB" id="7ST6">
    <property type="method" value="EM"/>
    <property type="resolution" value="3.00 A"/>
    <property type="chains" value="w=11-85"/>
</dbReference>
<dbReference type="PDB" id="7ST7">
    <property type="method" value="EM"/>
    <property type="resolution" value="3.20 A"/>
    <property type="chains" value="w=11-85"/>
</dbReference>
<dbReference type="PDB" id="7TOS">
    <property type="method" value="EM"/>
    <property type="resolution" value="2.90 A"/>
    <property type="chains" value="L27=11-85"/>
</dbReference>
<dbReference type="PDB" id="7UG7">
    <property type="method" value="EM"/>
    <property type="resolution" value="2.58 A"/>
    <property type="chains" value="La=1-85"/>
</dbReference>
<dbReference type="PDB" id="7UPH">
    <property type="method" value="EM"/>
    <property type="resolution" value="4.18 A"/>
    <property type="chains" value="v=11-85"/>
</dbReference>
<dbReference type="PDB" id="7Y7C">
    <property type="method" value="EM"/>
    <property type="resolution" value="2.51 A"/>
    <property type="chains" value="v=1-85"/>
</dbReference>
<dbReference type="PDB" id="7Y7D">
    <property type="method" value="EM"/>
    <property type="resolution" value="2.58 A"/>
    <property type="chains" value="v=1-85"/>
</dbReference>
<dbReference type="PDB" id="7Y7E">
    <property type="method" value="EM"/>
    <property type="resolution" value="2.41 A"/>
    <property type="chains" value="v=1-85"/>
</dbReference>
<dbReference type="PDB" id="7Y7F">
    <property type="method" value="EM"/>
    <property type="resolution" value="2.43 A"/>
    <property type="chains" value="v=1-85"/>
</dbReference>
<dbReference type="PDB" id="7Y7G">
    <property type="method" value="EM"/>
    <property type="resolution" value="2.34 A"/>
    <property type="chains" value="v=1-85"/>
</dbReference>
<dbReference type="PDB" id="7Y7H">
    <property type="method" value="EM"/>
    <property type="resolution" value="2.51 A"/>
    <property type="chains" value="v=1-85"/>
</dbReference>
<dbReference type="PDB" id="7YLA">
    <property type="method" value="EM"/>
    <property type="resolution" value="2.52 A"/>
    <property type="chains" value="e=11-85"/>
</dbReference>
<dbReference type="PDB" id="7Z20">
    <property type="method" value="EM"/>
    <property type="resolution" value="2.29 A"/>
    <property type="chains" value="y=1-85"/>
</dbReference>
<dbReference type="PDB" id="7ZOD">
    <property type="method" value="EM"/>
    <property type="resolution" value="2.56 A"/>
    <property type="chains" value="y=1-85"/>
</dbReference>
<dbReference type="PDB" id="7ZP8">
    <property type="method" value="EM"/>
    <property type="resolution" value="2.20 A"/>
    <property type="chains" value="y=1-85"/>
</dbReference>
<dbReference type="PDB" id="7ZQ5">
    <property type="method" value="EM"/>
    <property type="resolution" value="2.70 A"/>
    <property type="chains" value="y=1-85"/>
</dbReference>
<dbReference type="PDB" id="7ZQ6">
    <property type="method" value="EM"/>
    <property type="resolution" value="2.75 A"/>
    <property type="chains" value="y=1-85"/>
</dbReference>
<dbReference type="PDB" id="7ZTA">
    <property type="method" value="EM"/>
    <property type="resolution" value="2.70 A"/>
    <property type="chains" value="L271=2-85"/>
</dbReference>
<dbReference type="PDB" id="8A3L">
    <property type="method" value="EM"/>
    <property type="resolution" value="3.42 A"/>
    <property type="chains" value="v=1-85"/>
</dbReference>
<dbReference type="PDB" id="8AKN">
    <property type="method" value="EM"/>
    <property type="resolution" value="2.30 A"/>
    <property type="chains" value="v=1-85"/>
</dbReference>
<dbReference type="PDB" id="8AM9">
    <property type="method" value="EM"/>
    <property type="resolution" value="2.80 A"/>
    <property type="chains" value="v=1-85"/>
</dbReference>
<dbReference type="PDB" id="8ANA">
    <property type="method" value="EM"/>
    <property type="resolution" value="2.10 A"/>
    <property type="chains" value="v=1-85"/>
</dbReference>
<dbReference type="PDB" id="8AP4">
    <property type="method" value="EM"/>
    <property type="resolution" value="3.00 A"/>
    <property type="chains" value="v=1-85"/>
</dbReference>
<dbReference type="PDB" id="8AYE">
    <property type="method" value="EM"/>
    <property type="resolution" value="1.96 A"/>
    <property type="chains" value="v=1-85"/>
</dbReference>
<dbReference type="PDB" id="8B0X">
    <property type="method" value="EM"/>
    <property type="resolution" value="1.55 A"/>
    <property type="chains" value="v=1-85"/>
</dbReference>
<dbReference type="PDB" id="8B7Y">
    <property type="method" value="EM"/>
    <property type="resolution" value="3.00 A"/>
    <property type="chains" value="e=1-85"/>
</dbReference>
<dbReference type="PDB" id="8BF7">
    <property type="method" value="EM"/>
    <property type="resolution" value="2.33 A"/>
    <property type="chains" value="T=1-85"/>
</dbReference>
<dbReference type="PDB" id="8BGE">
    <property type="method" value="EM"/>
    <property type="resolution" value="2.11 A"/>
    <property type="chains" value="T=1-85"/>
</dbReference>
<dbReference type="PDB" id="8BGH">
    <property type="method" value="EM"/>
    <property type="resolution" value="2.88 A"/>
    <property type="chains" value="T=1-85"/>
</dbReference>
<dbReference type="PDB" id="8BH4">
    <property type="method" value="EM"/>
    <property type="resolution" value="2.62 A"/>
    <property type="chains" value="T=1-85"/>
</dbReference>
<dbReference type="PDB" id="8BHJ">
    <property type="method" value="EM"/>
    <property type="resolution" value="2.81 A"/>
    <property type="chains" value="T=1-85"/>
</dbReference>
<dbReference type="PDB" id="8BHL">
    <property type="method" value="EM"/>
    <property type="resolution" value="2.21 A"/>
    <property type="chains" value="T=1-85"/>
</dbReference>
<dbReference type="PDB" id="8BHN">
    <property type="method" value="EM"/>
    <property type="resolution" value="2.85 A"/>
    <property type="chains" value="T=1-85"/>
</dbReference>
<dbReference type="PDB" id="8BHP">
    <property type="method" value="EM"/>
    <property type="resolution" value="2.37 A"/>
    <property type="chains" value="T=1-85"/>
</dbReference>
<dbReference type="PDB" id="8BIL">
    <property type="method" value="EM"/>
    <property type="resolution" value="2.04 A"/>
    <property type="chains" value="T=1-85"/>
</dbReference>
<dbReference type="PDB" id="8BIM">
    <property type="method" value="EM"/>
    <property type="resolution" value="2.04 A"/>
    <property type="chains" value="T=1-85"/>
</dbReference>
<dbReference type="PDB" id="8C8X">
    <property type="method" value="EM"/>
    <property type="resolution" value="3.93 A"/>
    <property type="chains" value="W=1-85"/>
</dbReference>
<dbReference type="PDB" id="8C8Y">
    <property type="method" value="EM"/>
    <property type="resolution" value="3.03 A"/>
    <property type="chains" value="W=10-85"/>
</dbReference>
<dbReference type="PDB" id="8C8Z">
    <property type="method" value="EM"/>
    <property type="resolution" value="3.12 A"/>
    <property type="chains" value="W=1-85"/>
</dbReference>
<dbReference type="PDB" id="8C90">
    <property type="method" value="EM"/>
    <property type="resolution" value="3.15 A"/>
    <property type="chains" value="W=1-85"/>
</dbReference>
<dbReference type="PDB" id="8C94">
    <property type="method" value="EM"/>
    <property type="resolution" value="3.80 A"/>
    <property type="chains" value="W=1-85"/>
</dbReference>
<dbReference type="PDB" id="8C95">
    <property type="method" value="EM"/>
    <property type="resolution" value="4.92 A"/>
    <property type="chains" value="W=1-85"/>
</dbReference>
<dbReference type="PDB" id="8CAM">
    <property type="method" value="EM"/>
    <property type="resolution" value="1.86 A"/>
    <property type="chains" value="v=1-85"/>
</dbReference>
<dbReference type="PDB" id="8CEU">
    <property type="method" value="EM"/>
    <property type="resolution" value="1.83 A"/>
    <property type="chains" value="v=1-85"/>
</dbReference>
<dbReference type="PDB" id="8CGD">
    <property type="method" value="EM"/>
    <property type="resolution" value="1.98 A"/>
    <property type="chains" value="v=1-85"/>
</dbReference>
<dbReference type="PDB" id="8CGK">
    <property type="method" value="EM"/>
    <property type="resolution" value="1.64 A"/>
    <property type="chains" value="v=1-85"/>
</dbReference>
<dbReference type="PDB" id="8CGV">
    <property type="method" value="EM"/>
    <property type="resolution" value="1.66 A"/>
    <property type="chains" value="v=1-85"/>
</dbReference>
<dbReference type="PDB" id="8EIU">
    <property type="method" value="EM"/>
    <property type="resolution" value="2.24 A"/>
    <property type="chains" value="v=1-85"/>
</dbReference>
<dbReference type="PDB" id="8EKC">
    <property type="method" value="EM"/>
    <property type="resolution" value="2.70 A"/>
    <property type="chains" value="Y=1-85"/>
</dbReference>
<dbReference type="PDB" id="8EMM">
    <property type="method" value="EM"/>
    <property type="resolution" value="2.10 A"/>
    <property type="chains" value="v=1-85"/>
</dbReference>
<dbReference type="PDB" id="8FIZ">
    <property type="method" value="EM"/>
    <property type="resolution" value="3.80 A"/>
    <property type="chains" value="DD=1-85"/>
</dbReference>
<dbReference type="PDB" id="8FTO">
    <property type="method" value="EM"/>
    <property type="resolution" value="1.85 A"/>
    <property type="chains" value="v=1-85"/>
</dbReference>
<dbReference type="PDB" id="8FZD">
    <property type="method" value="EM"/>
    <property type="resolution" value="3.10 A"/>
    <property type="chains" value="Y=1-85"/>
</dbReference>
<dbReference type="PDB" id="8FZE">
    <property type="method" value="EM"/>
    <property type="resolution" value="3.00 A"/>
    <property type="chains" value="Y=1-85"/>
</dbReference>
<dbReference type="PDB" id="8FZF">
    <property type="method" value="EM"/>
    <property type="resolution" value="3.20 A"/>
    <property type="chains" value="Y=1-85"/>
</dbReference>
<dbReference type="PDB" id="8FZG">
    <property type="method" value="EM"/>
    <property type="resolution" value="3.10 A"/>
    <property type="chains" value="Y=1-85"/>
</dbReference>
<dbReference type="PDB" id="8FZH">
    <property type="method" value="EM"/>
    <property type="resolution" value="2.90 A"/>
    <property type="chains" value="Y=1-85"/>
</dbReference>
<dbReference type="PDB" id="8FZI">
    <property type="method" value="EM"/>
    <property type="resolution" value="3.10 A"/>
    <property type="chains" value="Y=1-85"/>
</dbReference>
<dbReference type="PDB" id="8FZJ">
    <property type="method" value="EM"/>
    <property type="resolution" value="3.00 A"/>
    <property type="chains" value="Y=1-85"/>
</dbReference>
<dbReference type="PDB" id="8G2U">
    <property type="method" value="EM"/>
    <property type="resolution" value="3.00 A"/>
    <property type="chains" value="W=7-85"/>
</dbReference>
<dbReference type="PDB" id="8G31">
    <property type="method" value="EM"/>
    <property type="resolution" value="3.20 A"/>
    <property type="chains" value="W=7-85"/>
</dbReference>
<dbReference type="PDB" id="8G34">
    <property type="method" value="EM"/>
    <property type="resolution" value="3.20 A"/>
    <property type="chains" value="W=7-85"/>
</dbReference>
<dbReference type="PDB" id="8G38">
    <property type="method" value="EM"/>
    <property type="resolution" value="3.20 A"/>
    <property type="chains" value="W=7-85"/>
</dbReference>
<dbReference type="PDB" id="8G6W">
    <property type="method" value="EM"/>
    <property type="resolution" value="2.02 A"/>
    <property type="chains" value="v=1-85"/>
</dbReference>
<dbReference type="PDB" id="8G6X">
    <property type="method" value="EM"/>
    <property type="resolution" value="2.31 A"/>
    <property type="chains" value="v=1-85"/>
</dbReference>
<dbReference type="PDB" id="8G6Y">
    <property type="method" value="EM"/>
    <property type="resolution" value="2.09 A"/>
    <property type="chains" value="v=1-85"/>
</dbReference>
<dbReference type="PDB" id="8G7P">
    <property type="method" value="EM"/>
    <property type="resolution" value="2.90 A"/>
    <property type="chains" value="Y=1-85"/>
</dbReference>
<dbReference type="PDB" id="8G7Q">
    <property type="method" value="EM"/>
    <property type="resolution" value="3.10 A"/>
    <property type="chains" value="Y=1-85"/>
</dbReference>
<dbReference type="PDB" id="8G7R">
    <property type="method" value="EM"/>
    <property type="resolution" value="2.80 A"/>
    <property type="chains" value="Y=1-85"/>
</dbReference>
<dbReference type="PDB" id="8G7S">
    <property type="method" value="EM"/>
    <property type="resolution" value="3.10 A"/>
    <property type="chains" value="Y=1-85"/>
</dbReference>
<dbReference type="PDB" id="8HSP">
    <property type="method" value="EM"/>
    <property type="resolution" value="2.32 A"/>
    <property type="chains" value="v=1-85"/>
</dbReference>
<dbReference type="PDB" id="8HTZ">
    <property type="method" value="EM"/>
    <property type="resolution" value="2.40 A"/>
    <property type="chains" value="v=1-85"/>
</dbReference>
<dbReference type="PDB" id="8HU1">
    <property type="method" value="EM"/>
    <property type="resolution" value="2.69 A"/>
    <property type="chains" value="v=1-85"/>
</dbReference>
<dbReference type="PDB" id="8IFB">
    <property type="method" value="EM"/>
    <property type="resolution" value="2.43 A"/>
    <property type="chains" value="v=1-85"/>
</dbReference>
<dbReference type="PDB" id="8IFC">
    <property type="method" value="EM"/>
    <property type="resolution" value="2.90 A"/>
    <property type="chains" value="v=1-85"/>
</dbReference>
<dbReference type="PDB" id="8J1Z">
    <property type="method" value="EM"/>
    <property type="resolution" value="2.60 A"/>
    <property type="chains" value="v=1-85"/>
</dbReference>
<dbReference type="PDB" id="8P16">
    <property type="method" value="EM"/>
    <property type="resolution" value="2.77 A"/>
    <property type="chains" value="W=1-85"/>
</dbReference>
<dbReference type="PDB" id="8P17">
    <property type="method" value="EM"/>
    <property type="resolution" value="2.78 A"/>
    <property type="chains" value="W=1-85"/>
</dbReference>
<dbReference type="PDB" id="8P18">
    <property type="method" value="EM"/>
    <property type="resolution" value="2.77 A"/>
    <property type="chains" value="W=1-85"/>
</dbReference>
<dbReference type="PDB" id="8PEG">
    <property type="method" value="EM"/>
    <property type="resolution" value="3.30 A"/>
    <property type="chains" value="z=1-85"/>
</dbReference>
<dbReference type="PDB" id="8PHJ">
    <property type="method" value="EM"/>
    <property type="resolution" value="3.67 A"/>
    <property type="chains" value="v=1-85"/>
</dbReference>
<dbReference type="PDB" id="8PKL">
    <property type="method" value="EM"/>
    <property type="resolution" value="3.09 A"/>
    <property type="chains" value="z=1-85"/>
</dbReference>
<dbReference type="PDB" id="8PVA">
    <property type="method" value="EM"/>
    <property type="resolution" value="4.50 A"/>
    <property type="chains" value="v=1-85"/>
</dbReference>
<dbReference type="PDB" id="8Q4F">
    <property type="method" value="EM"/>
    <property type="resolution" value="3.10 A"/>
    <property type="chains" value="v=1-85"/>
</dbReference>
<dbReference type="PDB" id="8QBT">
    <property type="method" value="EM"/>
    <property type="resolution" value="2.20 A"/>
    <property type="chains" value="W=1-85"/>
</dbReference>
<dbReference type="PDB" id="8QK7">
    <property type="method" value="EM"/>
    <property type="resolution" value="2.77 A"/>
    <property type="chains" value="W=1-85"/>
</dbReference>
<dbReference type="PDB" id="8QOA">
    <property type="method" value="EM"/>
    <property type="resolution" value="2.00 A"/>
    <property type="chains" value="v=1-85"/>
</dbReference>
<dbReference type="PDB" id="8R3V">
    <property type="method" value="EM"/>
    <property type="resolution" value="3.28 A"/>
    <property type="chains" value="z2=1-85"/>
</dbReference>
<dbReference type="PDB" id="8R6C">
    <property type="method" value="EM"/>
    <property type="resolution" value="2.20 A"/>
    <property type="chains" value="v=1-85"/>
</dbReference>
<dbReference type="PDB" id="8R8M">
    <property type="method" value="EM"/>
    <property type="resolution" value="2.40 A"/>
    <property type="chains" value="v=1-85"/>
</dbReference>
<dbReference type="PDB" id="8RCL">
    <property type="method" value="EM"/>
    <property type="resolution" value="3.49 A"/>
    <property type="chains" value="z2=1-85"/>
</dbReference>
<dbReference type="PDB" id="8RCM">
    <property type="method" value="EM"/>
    <property type="resolution" value="3.59 A"/>
    <property type="chains" value="z2=1-85"/>
</dbReference>
<dbReference type="PDB" id="8RCS">
    <property type="method" value="EM"/>
    <property type="resolution" value="4.46 A"/>
    <property type="chains" value="z2=1-85"/>
</dbReference>
<dbReference type="PDB" id="8RCT">
    <property type="method" value="EM"/>
    <property type="resolution" value="5.32 A"/>
    <property type="chains" value="z2=1-85"/>
</dbReference>
<dbReference type="PDB" id="8RPY">
    <property type="method" value="EM"/>
    <property type="resolution" value="2.64 A"/>
    <property type="chains" value="W=11-85"/>
</dbReference>
<dbReference type="PDB" id="8RPZ">
    <property type="method" value="EM"/>
    <property type="resolution" value="2.44 A"/>
    <property type="chains" value="W=11-85"/>
</dbReference>
<dbReference type="PDB" id="8RQ0">
    <property type="method" value="EM"/>
    <property type="resolution" value="2.44 A"/>
    <property type="chains" value="W=11-85"/>
</dbReference>
<dbReference type="PDB" id="8RQ2">
    <property type="method" value="EM"/>
    <property type="resolution" value="2.44 A"/>
    <property type="chains" value="W=11-85"/>
</dbReference>
<dbReference type="PDB" id="8SYL">
    <property type="method" value="EM"/>
    <property type="resolution" value="2.90 A"/>
    <property type="chains" value="Y=1-85"/>
</dbReference>
<dbReference type="PDB" id="8T5D">
    <property type="method" value="EM"/>
    <property type="resolution" value="3.20 A"/>
    <property type="chains" value="W=7-85"/>
</dbReference>
<dbReference type="PDB" id="8T5H">
    <property type="method" value="EM"/>
    <property type="resolution" value="3.30 A"/>
    <property type="chains" value="W=7-85"/>
</dbReference>
<dbReference type="PDB" id="8UPO">
    <property type="method" value="EM"/>
    <property type="resolution" value="5.50 A"/>
    <property type="chains" value="b=1-85"/>
</dbReference>
<dbReference type="PDB" id="8UPR">
    <property type="method" value="EM"/>
    <property type="resolution" value="5.30 A"/>
    <property type="chains" value="b=1-85"/>
</dbReference>
<dbReference type="PDB" id="8UQL">
    <property type="method" value="EM"/>
    <property type="resolution" value="3.20 A"/>
    <property type="chains" value="b=1-85"/>
</dbReference>
<dbReference type="PDB" id="8UQM">
    <property type="method" value="EM"/>
    <property type="resolution" value="5.30 A"/>
    <property type="chains" value="b=1-85"/>
</dbReference>
<dbReference type="PDB" id="8UQP">
    <property type="method" value="EM"/>
    <property type="resolution" value="3.80 A"/>
    <property type="chains" value="b=1-85"/>
</dbReference>
<dbReference type="PDB" id="8UR0">
    <property type="method" value="EM"/>
    <property type="resolution" value="3.40 A"/>
    <property type="chains" value="b=1-85"/>
</dbReference>
<dbReference type="PDB" id="8URH">
    <property type="method" value="EM"/>
    <property type="resolution" value="5.70 A"/>
    <property type="chains" value="b=1-85"/>
</dbReference>
<dbReference type="PDB" id="8URI">
    <property type="method" value="EM"/>
    <property type="resolution" value="5.30 A"/>
    <property type="chains" value="b=1-85"/>
</dbReference>
<dbReference type="PDB" id="8URX">
    <property type="method" value="EM"/>
    <property type="resolution" value="6.60 A"/>
    <property type="chains" value="b=1-85"/>
</dbReference>
<dbReference type="PDB" id="8URY">
    <property type="method" value="EM"/>
    <property type="resolution" value="3.10 A"/>
    <property type="chains" value="b=1-85"/>
</dbReference>
<dbReference type="PDB" id="8VS9">
    <property type="method" value="EM"/>
    <property type="resolution" value="3.90 A"/>
    <property type="chains" value="L27=1-85"/>
</dbReference>
<dbReference type="PDB" id="8VSA">
    <property type="method" value="EM"/>
    <property type="resolution" value="3.70 A"/>
    <property type="chains" value="L27=1-85"/>
</dbReference>
<dbReference type="PDB" id="8W51">
    <property type="method" value="EM"/>
    <property type="resolution" value="2.40 A"/>
    <property type="chains" value="X=1-85"/>
</dbReference>
<dbReference type="PDB" id="8YUO">
    <property type="method" value="EM"/>
    <property type="resolution" value="2.25 A"/>
    <property type="chains" value="v=1-85"/>
</dbReference>
<dbReference type="PDB" id="8YUP">
    <property type="method" value="EM"/>
    <property type="resolution" value="2.39 A"/>
    <property type="chains" value="v=1-85"/>
</dbReference>
<dbReference type="PDB" id="8YUQ">
    <property type="method" value="EM"/>
    <property type="resolution" value="2.41 A"/>
    <property type="chains" value="v=1-85"/>
</dbReference>
<dbReference type="PDB" id="8YUR">
    <property type="method" value="EM"/>
    <property type="resolution" value="2.47 A"/>
    <property type="chains" value="v=1-85"/>
</dbReference>
<dbReference type="PDB" id="8YUS">
    <property type="method" value="EM"/>
    <property type="resolution" value="2.43 A"/>
    <property type="chains" value="v=1-85"/>
</dbReference>
<dbReference type="PDB" id="9AX7">
    <property type="method" value="EM"/>
    <property type="resolution" value="2.63 A"/>
    <property type="chains" value="v=1-85"/>
</dbReference>
<dbReference type="PDB" id="9CG5">
    <property type="method" value="EM"/>
    <property type="resolution" value="2.59 A"/>
    <property type="chains" value="v=1-85"/>
</dbReference>
<dbReference type="PDB" id="9CG6">
    <property type="method" value="EM"/>
    <property type="resolution" value="2.61 A"/>
    <property type="chains" value="v=1-85"/>
</dbReference>
<dbReference type="PDB" id="9CG7">
    <property type="method" value="EM"/>
    <property type="resolution" value="2.75 A"/>
    <property type="chains" value="v=1-85"/>
</dbReference>
<dbReference type="PDB" id="9D89">
    <property type="method" value="EM"/>
    <property type="resolution" value="1.95 A"/>
    <property type="chains" value="L=8-85"/>
</dbReference>
<dbReference type="PDB" id="9FBV">
    <property type="method" value="EM"/>
    <property type="resolution" value="2.40 A"/>
    <property type="chains" value="v=1-85"/>
</dbReference>
<dbReference type="PDB" id="9GFT">
    <property type="method" value="EM"/>
    <property type="resolution" value="3.10 A"/>
    <property type="chains" value="Ar/j=1-85"/>
</dbReference>
<dbReference type="PDB" id="9GGR">
    <property type="method" value="EM"/>
    <property type="resolution" value="3.20 A"/>
    <property type="chains" value="Ar/j=1-85"/>
</dbReference>
<dbReference type="PDB" id="9GR1">
    <property type="method" value="EM"/>
    <property type="resolution" value="3.17 A"/>
    <property type="chains" value="v=1-85"/>
</dbReference>
<dbReference type="PDB" id="9H3P">
    <property type="method" value="EM"/>
    <property type="resolution" value="7.06 A"/>
    <property type="chains" value="W=11-85"/>
</dbReference>
<dbReference type="PDB" id="9H3Q">
    <property type="method" value="EM"/>
    <property type="resolution" value="4.02 A"/>
    <property type="chains" value="W=11-85"/>
</dbReference>
<dbReference type="PDB" id="9H3R">
    <property type="method" value="EM"/>
    <property type="resolution" value="4.12 A"/>
    <property type="chains" value="W=11-85"/>
</dbReference>
<dbReference type="PDB" id="9H3S">
    <property type="method" value="EM"/>
    <property type="resolution" value="4.16 A"/>
    <property type="chains" value="W=11-85"/>
</dbReference>
<dbReference type="PDB" id="9H3V">
    <property type="method" value="EM"/>
    <property type="resolution" value="3.55 A"/>
    <property type="chains" value="W=10-85"/>
</dbReference>
<dbReference type="PDB" id="9H3W">
    <property type="method" value="EM"/>
    <property type="resolution" value="5.38 A"/>
    <property type="chains" value="W=10-85"/>
</dbReference>
<dbReference type="PDB" id="9H3X">
    <property type="method" value="EM"/>
    <property type="resolution" value="4.12 A"/>
    <property type="chains" value="W=10-85"/>
</dbReference>
<dbReference type="PDB" id="9H3Y">
    <property type="method" value="EM"/>
    <property type="resolution" value="3.09 A"/>
    <property type="chains" value="W=11-85"/>
</dbReference>
<dbReference type="PDB" id="9H3Z">
    <property type="method" value="EM"/>
    <property type="resolution" value="2.98 A"/>
    <property type="chains" value="W=11-85"/>
</dbReference>
<dbReference type="PDB" id="9HA4">
    <property type="method" value="EM"/>
    <property type="resolution" value="4.26 A"/>
    <property type="chains" value="W=11-85"/>
</dbReference>
<dbReference type="PDB" id="9HA6">
    <property type="method" value="EM"/>
    <property type="resolution" value="3.08 A"/>
    <property type="chains" value="W=11-85"/>
</dbReference>
<dbReference type="PDB" id="9HA7">
    <property type="method" value="EM"/>
    <property type="resolution" value="4.37 A"/>
    <property type="chains" value="W=11-85"/>
</dbReference>
<dbReference type="PDB" id="9MOR">
    <property type="method" value="EM"/>
    <property type="resolution" value="2.65 A"/>
    <property type="chains" value="W=1-85"/>
</dbReference>
<dbReference type="PDB" id="9MQ4">
    <property type="method" value="EM"/>
    <property type="resolution" value="2.78 A"/>
    <property type="chains" value="W=1-85"/>
</dbReference>
<dbReference type="PDBsum" id="2J28"/>
<dbReference type="PDBsum" id="2RDO"/>
<dbReference type="PDBsum" id="3BBX"/>
<dbReference type="PDBsum" id="3J5L"/>
<dbReference type="PDBsum" id="3J7Z"/>
<dbReference type="PDBsum" id="3J8G"/>
<dbReference type="PDBsum" id="3J9Y"/>
<dbReference type="PDBsum" id="3J9Z"/>
<dbReference type="PDBsum" id="3JA1"/>
<dbReference type="PDBsum" id="3JBU"/>
<dbReference type="PDBsum" id="3JBV"/>
<dbReference type="PDBsum" id="3JCD"/>
<dbReference type="PDBsum" id="3JCE"/>
<dbReference type="PDBsum" id="3JCJ"/>
<dbReference type="PDBsum" id="3JCN"/>
<dbReference type="PDBsum" id="4CSU"/>
<dbReference type="PDBsum" id="4U1U"/>
<dbReference type="PDBsum" id="4U1V"/>
<dbReference type="PDBsum" id="4U20"/>
<dbReference type="PDBsum" id="4U24"/>
<dbReference type="PDBsum" id="4U25"/>
<dbReference type="PDBsum" id="4U26"/>
<dbReference type="PDBsum" id="4U27"/>
<dbReference type="PDBsum" id="4UY8"/>
<dbReference type="PDBsum" id="4V47"/>
<dbReference type="PDBsum" id="4V48"/>
<dbReference type="PDBsum" id="4V4H"/>
<dbReference type="PDBsum" id="4V4Q"/>
<dbReference type="PDBsum" id="4V4V"/>
<dbReference type="PDBsum" id="4V4W"/>
<dbReference type="PDBsum" id="4V50"/>
<dbReference type="PDBsum" id="4V52"/>
<dbReference type="PDBsum" id="4V53"/>
<dbReference type="PDBsum" id="4V54"/>
<dbReference type="PDBsum" id="4V55"/>
<dbReference type="PDBsum" id="4V56"/>
<dbReference type="PDBsum" id="4V57"/>
<dbReference type="PDBsum" id="4V5B"/>
<dbReference type="PDBsum" id="4V5H"/>
<dbReference type="PDBsum" id="4V5Y"/>
<dbReference type="PDBsum" id="4V64"/>
<dbReference type="PDBsum" id="4V65"/>
<dbReference type="PDBsum" id="4V66"/>
<dbReference type="PDBsum" id="4V69"/>
<dbReference type="PDBsum" id="4V6C"/>
<dbReference type="PDBsum" id="4V6D"/>
<dbReference type="PDBsum" id="4V6E"/>
<dbReference type="PDBsum" id="4V6K"/>
<dbReference type="PDBsum" id="4V6L"/>
<dbReference type="PDBsum" id="4V6M"/>
<dbReference type="PDBsum" id="4V6N"/>
<dbReference type="PDBsum" id="4V6O"/>
<dbReference type="PDBsum" id="4V6P"/>
<dbReference type="PDBsum" id="4V6Q"/>
<dbReference type="PDBsum" id="4V6R"/>
<dbReference type="PDBsum" id="4V6S"/>
<dbReference type="PDBsum" id="4V6T"/>
<dbReference type="PDBsum" id="4V6V"/>
<dbReference type="PDBsum" id="4V6Y"/>
<dbReference type="PDBsum" id="4V6Z"/>
<dbReference type="PDBsum" id="4V70"/>
<dbReference type="PDBsum" id="4V71"/>
<dbReference type="PDBsum" id="4V72"/>
<dbReference type="PDBsum" id="4V73"/>
<dbReference type="PDBsum" id="4V74"/>
<dbReference type="PDBsum" id="4V75"/>
<dbReference type="PDBsum" id="4V76"/>
<dbReference type="PDBsum" id="4V77"/>
<dbReference type="PDBsum" id="4V78"/>
<dbReference type="PDBsum" id="4V79"/>
<dbReference type="PDBsum" id="4V7A"/>
<dbReference type="PDBsum" id="4V7B"/>
<dbReference type="PDBsum" id="4V7C"/>
<dbReference type="PDBsum" id="4V7D"/>
<dbReference type="PDBsum" id="4V7I"/>
<dbReference type="PDBsum" id="4V7S"/>
<dbReference type="PDBsum" id="4V7T"/>
<dbReference type="PDBsum" id="4V7U"/>
<dbReference type="PDBsum" id="4V7V"/>
<dbReference type="PDBsum" id="4V85"/>
<dbReference type="PDBsum" id="4V89"/>
<dbReference type="PDBsum" id="4V9C"/>
<dbReference type="PDBsum" id="4V9D"/>
<dbReference type="PDBsum" id="4V9O"/>
<dbReference type="PDBsum" id="4V9P"/>
<dbReference type="PDBsum" id="4WF1"/>
<dbReference type="PDBsum" id="4WOI"/>
<dbReference type="PDBsum" id="4WWW"/>
<dbReference type="PDBsum" id="4YBB"/>
<dbReference type="PDBsum" id="5ADY"/>
<dbReference type="PDBsum" id="5AFI"/>
<dbReference type="PDBsum" id="5AKA"/>
<dbReference type="PDBsum" id="5GAD"/>
<dbReference type="PDBsum" id="5GAE"/>
<dbReference type="PDBsum" id="5GAF"/>
<dbReference type="PDBsum" id="5GAG"/>
<dbReference type="PDBsum" id="5GAH"/>
<dbReference type="PDBsum" id="5H5U"/>
<dbReference type="PDBsum" id="5IQR"/>
<dbReference type="PDBsum" id="5IT8"/>
<dbReference type="PDBsum" id="5J5B"/>
<dbReference type="PDBsum" id="5J7L"/>
<dbReference type="PDBsum" id="5J88"/>
<dbReference type="PDBsum" id="5J8A"/>
<dbReference type="PDBsum" id="5J91"/>
<dbReference type="PDBsum" id="5JC9"/>
<dbReference type="PDBsum" id="5JTE"/>
<dbReference type="PDBsum" id="5JU8"/>
<dbReference type="PDBsum" id="5KCR"/>
<dbReference type="PDBsum" id="5KCS"/>
<dbReference type="PDBsum" id="5KPS"/>
<dbReference type="PDBsum" id="5KPV"/>
<dbReference type="PDBsum" id="5KPW"/>
<dbReference type="PDBsum" id="5KPX"/>
<dbReference type="PDBsum" id="5L3P"/>
<dbReference type="PDBsum" id="5LZA"/>
<dbReference type="PDBsum" id="5LZB"/>
<dbReference type="PDBsum" id="5LZC"/>
<dbReference type="PDBsum" id="5LZD"/>
<dbReference type="PDBsum" id="5LZE"/>
<dbReference type="PDBsum" id="5LZF"/>
<dbReference type="PDBsum" id="5MDV"/>
<dbReference type="PDBsum" id="5MDW"/>
<dbReference type="PDBsum" id="5MDY"/>
<dbReference type="PDBsum" id="5MDZ"/>
<dbReference type="PDBsum" id="5MGP"/>
<dbReference type="PDBsum" id="5NCO"/>
<dbReference type="PDBsum" id="5NP6"/>
<dbReference type="PDBsum" id="5NWY"/>
<dbReference type="PDBsum" id="5O2R"/>
<dbReference type="PDBsum" id="5U4I"/>
<dbReference type="PDBsum" id="5U9F"/>
<dbReference type="PDBsum" id="5U9G"/>
<dbReference type="PDBsum" id="5UYK"/>
<dbReference type="PDBsum" id="5UYL"/>
<dbReference type="PDBsum" id="5UYM"/>
<dbReference type="PDBsum" id="5UYN"/>
<dbReference type="PDBsum" id="5UYP"/>
<dbReference type="PDBsum" id="5UYQ"/>
<dbReference type="PDBsum" id="5WDT"/>
<dbReference type="PDBsum" id="5WE4"/>
<dbReference type="PDBsum" id="5WE6"/>
<dbReference type="PDBsum" id="5WF0"/>
<dbReference type="PDBsum" id="5WFK"/>
<dbReference type="PDBsum" id="5WFS"/>
<dbReference type="PDBsum" id="6BU8"/>
<dbReference type="PDBsum" id="6BY1"/>
<dbReference type="PDBsum" id="6C4H"/>
<dbReference type="PDBsum" id="6C4I"/>
<dbReference type="PDBsum" id="6DNC"/>
<dbReference type="PDBsum" id="6ENF"/>
<dbReference type="PDBsum" id="6ENJ"/>
<dbReference type="PDBsum" id="6ENU"/>
<dbReference type="PDBsum" id="6GBZ"/>
<dbReference type="PDBsum" id="6GC0"/>
<dbReference type="PDBsum" id="6GC4"/>
<dbReference type="PDBsum" id="6GC8"/>
<dbReference type="PDBsum" id="6GWT"/>
<dbReference type="PDBsum" id="6GXM"/>
<dbReference type="PDBsum" id="6GXN"/>
<dbReference type="PDBsum" id="6GXO"/>
<dbReference type="PDBsum" id="6GXP"/>
<dbReference type="PDBsum" id="6H4N"/>
<dbReference type="PDBsum" id="6H58"/>
<dbReference type="PDBsum" id="6HRM"/>
<dbReference type="PDBsum" id="6I0Y"/>
<dbReference type="PDBsum" id="6I7V"/>
<dbReference type="PDBsum" id="6O9J"/>
<dbReference type="PDBsum" id="6O9K"/>
<dbReference type="PDBsum" id="6OFX"/>
<dbReference type="PDBsum" id="6OG7"/>
<dbReference type="PDBsum" id="6OGF"/>
<dbReference type="PDBsum" id="6OGG"/>
<dbReference type="PDBsum" id="6OGI"/>
<dbReference type="PDBsum" id="6OM6"/>
<dbReference type="PDBsum" id="6ORE"/>
<dbReference type="PDBsum" id="6ORL"/>
<dbReference type="PDBsum" id="6OSK"/>
<dbReference type="PDBsum" id="6OSQ"/>
<dbReference type="PDBsum" id="6OST"/>
<dbReference type="PDBsum" id="6OT3"/>
<dbReference type="PDBsum" id="6OUO"/>
<dbReference type="PDBsum" id="6PJ6"/>
<dbReference type="PDBsum" id="6Q97"/>
<dbReference type="PDBsum" id="6Q98"/>
<dbReference type="PDBsum" id="6Q9A"/>
<dbReference type="PDBsum" id="6QDW"/>
<dbReference type="PDBsum" id="6QUL"/>
<dbReference type="PDBsum" id="6S0K"/>
<dbReference type="PDBsum" id="6SZS"/>
<dbReference type="PDBsum" id="6TBV"/>
<dbReference type="PDBsum" id="6TC3"/>
<dbReference type="PDBsum" id="6U48"/>
<dbReference type="PDBsum" id="6VU3"/>
<dbReference type="PDBsum" id="6VWL"/>
<dbReference type="PDBsum" id="6VWM"/>
<dbReference type="PDBsum" id="6VWN"/>
<dbReference type="PDBsum" id="6VYQ"/>
<dbReference type="PDBsum" id="6VYR"/>
<dbReference type="PDBsum" id="6VYS"/>
<dbReference type="PDBsum" id="6VYT"/>
<dbReference type="PDBsum" id="6VYU"/>
<dbReference type="PDBsum" id="6VYW"/>
<dbReference type="PDBsum" id="6VYX"/>
<dbReference type="PDBsum" id="6VYY"/>
<dbReference type="PDBsum" id="6VYZ"/>
<dbReference type="PDBsum" id="6VZ2"/>
<dbReference type="PDBsum" id="6VZ3"/>
<dbReference type="PDBsum" id="6VZ5"/>
<dbReference type="PDBsum" id="6VZ7"/>
<dbReference type="PDBsum" id="6VZJ"/>
<dbReference type="PDBsum" id="6WD0"/>
<dbReference type="PDBsum" id="6WD1"/>
<dbReference type="PDBsum" id="6WD2"/>
<dbReference type="PDBsum" id="6WD3"/>
<dbReference type="PDBsum" id="6WD4"/>
<dbReference type="PDBsum" id="6WD5"/>
<dbReference type="PDBsum" id="6WD6"/>
<dbReference type="PDBsum" id="6WD7"/>
<dbReference type="PDBsum" id="6WD8"/>
<dbReference type="PDBsum" id="6WD9"/>
<dbReference type="PDBsum" id="6WDA"/>
<dbReference type="PDBsum" id="6WDB"/>
<dbReference type="PDBsum" id="6WDC"/>
<dbReference type="PDBsum" id="6WDD"/>
<dbReference type="PDBsum" id="6WDE"/>
<dbReference type="PDBsum" id="6WDF"/>
<dbReference type="PDBsum" id="6WDG"/>
<dbReference type="PDBsum" id="6WDH"/>
<dbReference type="PDBsum" id="6WDI"/>
<dbReference type="PDBsum" id="6WDJ"/>
<dbReference type="PDBsum" id="6WDK"/>
<dbReference type="PDBsum" id="6WDL"/>
<dbReference type="PDBsum" id="6WDM"/>
<dbReference type="PDBsum" id="6WNT"/>
<dbReference type="PDBsum" id="6WNV"/>
<dbReference type="PDBsum" id="6WNW"/>
<dbReference type="PDBsum" id="6X6T"/>
<dbReference type="PDBsum" id="6X7F"/>
<dbReference type="PDBsum" id="6X7K"/>
<dbReference type="PDBsum" id="6X9Q"/>
<dbReference type="PDBsum" id="6XDQ"/>
<dbReference type="PDBsum" id="6XDR"/>
<dbReference type="PDBsum" id="6XGF"/>
<dbReference type="PDBsum" id="6XII"/>
<dbReference type="PDBsum" id="6XIJ"/>
<dbReference type="PDBsum" id="6XZ7"/>
<dbReference type="PDBsum" id="6XZA"/>
<dbReference type="PDBsum" id="6XZB"/>
<dbReference type="PDBsum" id="6Y69"/>
<dbReference type="PDBsum" id="6YS3"/>
<dbReference type="PDBsum" id="6YSR"/>
<dbReference type="PDBsum" id="6YSS"/>
<dbReference type="PDBsum" id="6YST"/>
<dbReference type="PDBsum" id="6YSU"/>
<dbReference type="PDBsum" id="6ZTJ"/>
<dbReference type="PDBsum" id="6ZTL"/>
<dbReference type="PDBsum" id="6ZTM"/>
<dbReference type="PDBsum" id="6ZTN"/>
<dbReference type="PDBsum" id="6ZTO"/>
<dbReference type="PDBsum" id="6ZTP"/>
<dbReference type="PDBsum" id="6ZU1"/>
<dbReference type="PDBsum" id="7AC7"/>
<dbReference type="PDBsum" id="7ACJ"/>
<dbReference type="PDBsum" id="7ACR"/>
<dbReference type="PDBsum" id="7B5K"/>
<dbReference type="PDBsum" id="7BL2"/>
<dbReference type="PDBsum" id="7BL3"/>
<dbReference type="PDBsum" id="7BL4"/>
<dbReference type="PDBsum" id="7BL5"/>
<dbReference type="PDBsum" id="7BL6"/>
<dbReference type="PDBsum" id="7BV8"/>
<dbReference type="PDBsum" id="7D6Z"/>
<dbReference type="PDBsum" id="7D80"/>
<dbReference type="PDBsum" id="7JSS"/>
<dbReference type="PDBsum" id="7JSW"/>
<dbReference type="PDBsum" id="7JSZ"/>
<dbReference type="PDBsum" id="7JT1"/>
<dbReference type="PDBsum" id="7JT2"/>
<dbReference type="PDBsum" id="7JT3"/>
<dbReference type="PDBsum" id="7K00"/>
<dbReference type="PDBsum" id="7K50"/>
<dbReference type="PDBsum" id="7K51"/>
<dbReference type="PDBsum" id="7K52"/>
<dbReference type="PDBsum" id="7K53"/>
<dbReference type="PDBsum" id="7K54"/>
<dbReference type="PDBsum" id="7K55"/>
<dbReference type="PDBsum" id="7LV0"/>
<dbReference type="PDBsum" id="7LVK"/>
<dbReference type="PDBsum" id="7M5D"/>
<dbReference type="PDBsum" id="7N1P"/>
<dbReference type="PDBsum" id="7N2C"/>
<dbReference type="PDBsum" id="7N2U"/>
<dbReference type="PDBsum" id="7N2V"/>
<dbReference type="PDBsum" id="7N30"/>
<dbReference type="PDBsum" id="7N31"/>
<dbReference type="PDBsum" id="7NBU"/>
<dbReference type="PDBsum" id="7NWT"/>
<dbReference type="PDBsum" id="7O19"/>
<dbReference type="PDBsum" id="7O1A"/>
<dbReference type="PDBsum" id="7O1C"/>
<dbReference type="PDBsum" id="7OIZ"/>
<dbReference type="PDBsum" id="7OJ0"/>
<dbReference type="PDBsum" id="7P3K"/>
<dbReference type="PDBsum" id="7PJS"/>
<dbReference type="PDBsum" id="7PJT"/>
<dbReference type="PDBsum" id="7PJU"/>
<dbReference type="PDBsum" id="7PJV"/>
<dbReference type="PDBsum" id="7PJW"/>
<dbReference type="PDBsum" id="7PJX"/>
<dbReference type="PDBsum" id="7PJY"/>
<dbReference type="PDBsum" id="7PJZ"/>
<dbReference type="PDBsum" id="7Q4K"/>
<dbReference type="PDBsum" id="7QG8"/>
<dbReference type="PDBsum" id="7QGH"/>
<dbReference type="PDBsum" id="7QGN"/>
<dbReference type="PDBsum" id="7QGR"/>
<dbReference type="PDBsum" id="7QQ3"/>
<dbReference type="PDBsum" id="7S1G"/>
<dbReference type="PDBsum" id="7S1H"/>
<dbReference type="PDBsum" id="7S1I"/>
<dbReference type="PDBsum" id="7S1J"/>
<dbReference type="PDBsum" id="7S1K"/>
<dbReference type="PDBsum" id="7SA4"/>
<dbReference type="PDBsum" id="7SS9"/>
<dbReference type="PDBsum" id="7SSD"/>
<dbReference type="PDBsum" id="7SSL"/>
<dbReference type="PDBsum" id="7SSN"/>
<dbReference type="PDBsum" id="7SSO"/>
<dbReference type="PDBsum" id="7SSW"/>
<dbReference type="PDBsum" id="7ST2"/>
<dbReference type="PDBsum" id="7ST6"/>
<dbReference type="PDBsum" id="7ST7"/>
<dbReference type="PDBsum" id="7TOS"/>
<dbReference type="PDBsum" id="7UG7"/>
<dbReference type="PDBsum" id="7UPH"/>
<dbReference type="PDBsum" id="7Y7C"/>
<dbReference type="PDBsum" id="7Y7D"/>
<dbReference type="PDBsum" id="7Y7E"/>
<dbReference type="PDBsum" id="7Y7F"/>
<dbReference type="PDBsum" id="7Y7G"/>
<dbReference type="PDBsum" id="7Y7H"/>
<dbReference type="PDBsum" id="7YLA"/>
<dbReference type="PDBsum" id="7Z20"/>
<dbReference type="PDBsum" id="7ZOD"/>
<dbReference type="PDBsum" id="7ZP8"/>
<dbReference type="PDBsum" id="7ZQ5"/>
<dbReference type="PDBsum" id="7ZQ6"/>
<dbReference type="PDBsum" id="7ZTA"/>
<dbReference type="PDBsum" id="8A3L"/>
<dbReference type="PDBsum" id="8AKN"/>
<dbReference type="PDBsum" id="8AM9"/>
<dbReference type="PDBsum" id="8ANA"/>
<dbReference type="PDBsum" id="8AP4"/>
<dbReference type="PDBsum" id="8AYE"/>
<dbReference type="PDBsum" id="8B0X"/>
<dbReference type="PDBsum" id="8B7Y"/>
<dbReference type="PDBsum" id="8BF7"/>
<dbReference type="PDBsum" id="8BGE"/>
<dbReference type="PDBsum" id="8BGH"/>
<dbReference type="PDBsum" id="8BH4"/>
<dbReference type="PDBsum" id="8BHJ"/>
<dbReference type="PDBsum" id="8BHL"/>
<dbReference type="PDBsum" id="8BHN"/>
<dbReference type="PDBsum" id="8BHP"/>
<dbReference type="PDBsum" id="8BIL"/>
<dbReference type="PDBsum" id="8BIM"/>
<dbReference type="PDBsum" id="8C8X"/>
<dbReference type="PDBsum" id="8C8Y"/>
<dbReference type="PDBsum" id="8C8Z"/>
<dbReference type="PDBsum" id="8C90"/>
<dbReference type="PDBsum" id="8C94"/>
<dbReference type="PDBsum" id="8C95"/>
<dbReference type="PDBsum" id="8CAM"/>
<dbReference type="PDBsum" id="8CEU"/>
<dbReference type="PDBsum" id="8CGD"/>
<dbReference type="PDBsum" id="8CGK"/>
<dbReference type="PDBsum" id="8CGV"/>
<dbReference type="PDBsum" id="8EIU"/>
<dbReference type="PDBsum" id="8EKC"/>
<dbReference type="PDBsum" id="8EMM"/>
<dbReference type="PDBsum" id="8FIZ"/>
<dbReference type="PDBsum" id="8FTO"/>
<dbReference type="PDBsum" id="8FZD"/>
<dbReference type="PDBsum" id="8FZE"/>
<dbReference type="PDBsum" id="8FZF"/>
<dbReference type="PDBsum" id="8FZG"/>
<dbReference type="PDBsum" id="8FZH"/>
<dbReference type="PDBsum" id="8FZI"/>
<dbReference type="PDBsum" id="8FZJ"/>
<dbReference type="PDBsum" id="8G2U"/>
<dbReference type="PDBsum" id="8G31"/>
<dbReference type="PDBsum" id="8G34"/>
<dbReference type="PDBsum" id="8G38"/>
<dbReference type="PDBsum" id="8G6W"/>
<dbReference type="PDBsum" id="8G6X"/>
<dbReference type="PDBsum" id="8G6Y"/>
<dbReference type="PDBsum" id="8G7P"/>
<dbReference type="PDBsum" id="8G7Q"/>
<dbReference type="PDBsum" id="8G7R"/>
<dbReference type="PDBsum" id="8G7S"/>
<dbReference type="PDBsum" id="8HSP"/>
<dbReference type="PDBsum" id="8HTZ"/>
<dbReference type="PDBsum" id="8HU1"/>
<dbReference type="PDBsum" id="8IFB"/>
<dbReference type="PDBsum" id="8IFC"/>
<dbReference type="PDBsum" id="8J1Z"/>
<dbReference type="PDBsum" id="8P16"/>
<dbReference type="PDBsum" id="8P17"/>
<dbReference type="PDBsum" id="8P18"/>
<dbReference type="PDBsum" id="8PEG"/>
<dbReference type="PDBsum" id="8PHJ"/>
<dbReference type="PDBsum" id="8PKL"/>
<dbReference type="PDBsum" id="8PVA"/>
<dbReference type="PDBsum" id="8Q4F"/>
<dbReference type="PDBsum" id="8QBT"/>
<dbReference type="PDBsum" id="8QK7"/>
<dbReference type="PDBsum" id="8QOA"/>
<dbReference type="PDBsum" id="8R3V"/>
<dbReference type="PDBsum" id="8R6C"/>
<dbReference type="PDBsum" id="8R8M"/>
<dbReference type="PDBsum" id="8RCL"/>
<dbReference type="PDBsum" id="8RCM"/>
<dbReference type="PDBsum" id="8RCS"/>
<dbReference type="PDBsum" id="8RCT"/>
<dbReference type="PDBsum" id="8RPY"/>
<dbReference type="PDBsum" id="8RPZ"/>
<dbReference type="PDBsum" id="8RQ0"/>
<dbReference type="PDBsum" id="8RQ2"/>
<dbReference type="PDBsum" id="8SYL"/>
<dbReference type="PDBsum" id="8T5D"/>
<dbReference type="PDBsum" id="8T5H"/>
<dbReference type="PDBsum" id="8UPO"/>
<dbReference type="PDBsum" id="8UPR"/>
<dbReference type="PDBsum" id="8UQL"/>
<dbReference type="PDBsum" id="8UQM"/>
<dbReference type="PDBsum" id="8UQP"/>
<dbReference type="PDBsum" id="8UR0"/>
<dbReference type="PDBsum" id="8URH"/>
<dbReference type="PDBsum" id="8URI"/>
<dbReference type="PDBsum" id="8URX"/>
<dbReference type="PDBsum" id="8URY"/>
<dbReference type="PDBsum" id="8VS9"/>
<dbReference type="PDBsum" id="8VSA"/>
<dbReference type="PDBsum" id="8W51"/>
<dbReference type="PDBsum" id="8YUO"/>
<dbReference type="PDBsum" id="8YUP"/>
<dbReference type="PDBsum" id="8YUQ"/>
<dbReference type="PDBsum" id="8YUR"/>
<dbReference type="PDBsum" id="8YUS"/>
<dbReference type="PDBsum" id="9AX7"/>
<dbReference type="PDBsum" id="9CG5"/>
<dbReference type="PDBsum" id="9CG6"/>
<dbReference type="PDBsum" id="9CG7"/>
<dbReference type="PDBsum" id="9D89"/>
<dbReference type="PDBsum" id="9FBV"/>
<dbReference type="PDBsum" id="9GFT"/>
<dbReference type="PDBsum" id="9GGR"/>
<dbReference type="PDBsum" id="9GR1"/>
<dbReference type="PDBsum" id="9H3P"/>
<dbReference type="PDBsum" id="9H3Q"/>
<dbReference type="PDBsum" id="9H3R"/>
<dbReference type="PDBsum" id="9H3S"/>
<dbReference type="PDBsum" id="9H3V"/>
<dbReference type="PDBsum" id="9H3W"/>
<dbReference type="PDBsum" id="9H3X"/>
<dbReference type="PDBsum" id="9H3Y"/>
<dbReference type="PDBsum" id="9H3Z"/>
<dbReference type="PDBsum" id="9HA4"/>
<dbReference type="PDBsum" id="9HA6"/>
<dbReference type="PDBsum" id="9HA7"/>
<dbReference type="PDBsum" id="9MOR"/>
<dbReference type="PDBsum" id="9MQ4"/>
<dbReference type="EMDB" id="EMD-0076"/>
<dbReference type="EMDB" id="EMD-0080"/>
<dbReference type="EMDB" id="EMD-0081"/>
<dbReference type="EMDB" id="EMD-0082"/>
<dbReference type="EMDB" id="EMD-0083"/>
<dbReference type="EMDB" id="EMD-0137"/>
<dbReference type="EMDB" id="EMD-0139"/>
<dbReference type="EMDB" id="EMD-0261"/>
<dbReference type="EMDB" id="EMD-0322"/>
<dbReference type="EMDB" id="EMD-10073"/>
<dbReference type="EMDB" id="EMD-10353"/>
<dbReference type="EMDB" id="EMD-10453"/>
<dbReference type="EMDB" id="EMD-10458"/>
<dbReference type="EMDB" id="EMD-10655"/>
<dbReference type="EMDB" id="EMD-10656"/>
<dbReference type="EMDB" id="EMD-10657"/>
<dbReference type="EMDB" id="EMD-10705"/>
<dbReference type="EMDB" id="EMD-10905"/>
<dbReference type="EMDB" id="EMD-10906"/>
<dbReference type="EMDB" id="EMD-10907"/>
<dbReference type="EMDB" id="EMD-10908"/>
<dbReference type="EMDB" id="EMD-11418"/>
<dbReference type="EMDB" id="EMD-11419"/>
<dbReference type="EMDB" id="EMD-11420"/>
<dbReference type="EMDB" id="EMD-11421"/>
<dbReference type="EMDB" id="EMD-11422"/>
<dbReference type="EMDB" id="EMD-11423"/>
<dbReference type="EMDB" id="EMD-11426"/>
<dbReference type="EMDB" id="EMD-11713"/>
<dbReference type="EMDB" id="EMD-11717"/>
<dbReference type="EMDB" id="EMD-11718"/>
<dbReference type="EMDB" id="EMD-12035"/>
<dbReference type="EMDB" id="EMD-12215"/>
<dbReference type="EMDB" id="EMD-12216"/>
<dbReference type="EMDB" id="EMD-12217"/>
<dbReference type="EMDB" id="EMD-12218"/>
<dbReference type="EMDB" id="EMD-12219"/>
<dbReference type="EMDB" id="EMD-12261"/>
<dbReference type="EMDB" id="EMD-12635"/>
<dbReference type="EMDB" id="EMD-12693"/>
<dbReference type="EMDB" id="EMD-12694"/>
<dbReference type="EMDB" id="EMD-12695"/>
<dbReference type="EMDB" id="EMD-12936"/>
<dbReference type="EMDB" id="EMD-12937"/>
<dbReference type="EMDB" id="EMD-13180"/>
<dbReference type="EMDB" id="EMD-13458"/>
<dbReference type="EMDB" id="EMD-13459"/>
<dbReference type="EMDB" id="EMD-13461"/>
<dbReference type="EMDB" id="EMD-13462"/>
<dbReference type="EMDB" id="EMD-13463"/>
<dbReference type="EMDB" id="EMD-13464"/>
<dbReference type="EMDB" id="EMD-13465"/>
<dbReference type="EMDB" id="EMD-13805"/>
<dbReference type="EMDB" id="EMD-13952"/>
<dbReference type="EMDB" id="EMD-13955"/>
<dbReference type="EMDB" id="EMD-14121"/>
<dbReference type="EMDB" id="EMD-14846"/>
<dbReference type="EMDB" id="EMD-14956"/>
<dbReference type="EMDB" id="EMD-15116"/>
<dbReference type="EMDB" id="EMD-15558"/>
<dbReference type="EMDB" id="EMD-15712"/>
<dbReference type="EMDB" id="EMD-15793"/>
<dbReference type="EMDB" id="EMD-15905"/>
<dbReference type="EMDB" id="EMD-16015"/>
<dbReference type="EMDB" id="EMD-16029"/>
<dbReference type="EMDB" id="EMD-16031"/>
<dbReference type="EMDB" id="EMD-16047"/>
<dbReference type="EMDB" id="EMD-16057"/>
<dbReference type="EMDB" id="EMD-16059"/>
<dbReference type="EMDB" id="EMD-16062"/>
<dbReference type="EMDB" id="EMD-16065"/>
<dbReference type="EMDB" id="EMD-16081"/>
<dbReference type="EMDB" id="EMD-16082"/>
<dbReference type="EMDB" id="EMD-16494"/>
<dbReference type="EMDB" id="EMD-16495"/>
<dbReference type="EMDB" id="EMD-16496"/>
<dbReference type="EMDB" id="EMD-16497"/>
<dbReference type="EMDB" id="EMD-16501"/>
<dbReference type="EMDB" id="EMD-16502"/>
<dbReference type="EMDB" id="EMD-16530"/>
<dbReference type="EMDB" id="EMD-16613"/>
<dbReference type="EMDB" id="EMD-16641"/>
<dbReference type="EMDB" id="EMD-16646"/>
<dbReference type="EMDB" id="EMD-16652"/>
<dbReference type="EMDB" id="EMD-17346"/>
<dbReference type="EMDB" id="EMD-17347"/>
<dbReference type="EMDB" id="EMD-17348"/>
<dbReference type="EMDB" id="EMD-17631"/>
<dbReference type="EMDB" id="EMD-17667"/>
<dbReference type="EMDB" id="EMD-17743"/>
<dbReference type="EMDB" id="EMD-17959"/>
<dbReference type="EMDB" id="EMD-18145"/>
<dbReference type="EMDB" id="EMD-18320"/>
<dbReference type="EMDB" id="EMD-18458"/>
<dbReference type="EMDB" id="EMD-18534"/>
<dbReference type="EMDB" id="EMD-18875"/>
<dbReference type="EMDB" id="EMD-18950"/>
<dbReference type="EMDB" id="EMD-19004"/>
<dbReference type="EMDB" id="EMD-19054"/>
<dbReference type="EMDB" id="EMD-19055"/>
<dbReference type="EMDB" id="EMD-19058"/>
<dbReference type="EMDB" id="EMD-19059"/>
<dbReference type="EMDB" id="EMD-19426"/>
<dbReference type="EMDB" id="EMD-19427"/>
<dbReference type="EMDB" id="EMD-19428"/>
<dbReference type="EMDB" id="EMD-19429"/>
<dbReference type="EMDB" id="EMD-20048"/>
<dbReference type="EMDB" id="EMD-20052"/>
<dbReference type="EMDB" id="EMD-20056"/>
<dbReference type="EMDB" id="EMD-20057"/>
<dbReference type="EMDB" id="EMD-20058"/>
<dbReference type="EMDB" id="EMD-20121"/>
<dbReference type="EMDB" id="EMD-21420"/>
<dbReference type="EMDB" id="EMD-21421"/>
<dbReference type="EMDB" id="EMD-21422"/>
<dbReference type="EMDB" id="EMD-21468"/>
<dbReference type="EMDB" id="EMD-21469"/>
<dbReference type="EMDB" id="EMD-21470"/>
<dbReference type="EMDB" id="EMD-21471"/>
<dbReference type="EMDB" id="EMD-21475"/>
<dbReference type="EMDB" id="EMD-21476"/>
<dbReference type="EMDB" id="EMD-21477"/>
<dbReference type="EMDB" id="EMD-21482"/>
<dbReference type="EMDB" id="EMD-21485"/>
<dbReference type="EMDB" id="EMD-21620"/>
<dbReference type="EMDB" id="EMD-21625"/>
<dbReference type="EMDB" id="EMD-21630"/>
<dbReference type="EMDB" id="EMD-21631"/>
<dbReference type="EMDB" id="EMD-21632"/>
<dbReference type="EMDB" id="EMD-21633"/>
<dbReference type="EMDB" id="EMD-21634"/>
<dbReference type="EMDB" id="EMD-21635"/>
<dbReference type="EMDB" id="EMD-21636"/>
<dbReference type="EMDB" id="EMD-21637"/>
<dbReference type="EMDB" id="EMD-21638"/>
<dbReference type="EMDB" id="EMD-21639"/>
<dbReference type="EMDB" id="EMD-21640"/>
<dbReference type="EMDB" id="EMD-21641"/>
<dbReference type="EMDB" id="EMD-21856"/>
<dbReference type="EMDB" id="EMD-21857"/>
<dbReference type="EMDB" id="EMD-21858"/>
<dbReference type="EMDB" id="EMD-22082"/>
<dbReference type="EMDB" id="EMD-22084"/>
<dbReference type="EMDB" id="EMD-22087"/>
<dbReference type="EMDB" id="EMD-22107"/>
<dbReference type="EMDB" id="EMD-22141"/>
<dbReference type="EMDB" id="EMD-22142"/>
<dbReference type="EMDB" id="EMD-22181"/>
<dbReference type="EMDB" id="EMD-22192"/>
<dbReference type="EMDB" id="EMD-22193"/>
<dbReference type="EMDB" id="EMD-22459"/>
<dbReference type="EMDB" id="EMD-22461"/>
<dbReference type="EMDB" id="EMD-22464"/>
<dbReference type="EMDB" id="EMD-22466"/>
<dbReference type="EMDB" id="EMD-22469"/>
<dbReference type="EMDB" id="EMD-22472"/>
<dbReference type="EMDB" id="EMD-22586"/>
<dbReference type="EMDB" id="EMD-22669"/>
<dbReference type="EMDB" id="EMD-22670"/>
<dbReference type="EMDB" id="EMD-22671"/>
<dbReference type="EMDB" id="EMD-22672"/>
<dbReference type="EMDB" id="EMD-22673"/>
<dbReference type="EMDB" id="EMD-22674"/>
<dbReference type="EMDB" id="EMD-23528"/>
<dbReference type="EMDB" id="EMD-23539"/>
<dbReference type="EMDB" id="EMD-24120"/>
<dbReference type="EMDB" id="EMD-24132"/>
<dbReference type="EMDB" id="EMD-24133"/>
<dbReference type="EMDB" id="EMD-24134"/>
<dbReference type="EMDB" id="EMD-24135"/>
<dbReference type="EMDB" id="EMD-24136"/>
<dbReference type="EMDB" id="EMD-24800"/>
<dbReference type="EMDB" id="EMD-24801"/>
<dbReference type="EMDB" id="EMD-24802"/>
<dbReference type="EMDB" id="EMD-24803"/>
<dbReference type="EMDB" id="EMD-24804"/>
<dbReference type="EMDB" id="EMD-24944"/>
<dbReference type="EMDB" id="EMD-25405"/>
<dbReference type="EMDB" id="EMD-25407"/>
<dbReference type="EMDB" id="EMD-25409"/>
<dbReference type="EMDB" id="EMD-25410"/>
<dbReference type="EMDB" id="EMD-25411"/>
<dbReference type="EMDB" id="EMD-25415"/>
<dbReference type="EMDB" id="EMD-25418"/>
<dbReference type="EMDB" id="EMD-25420"/>
<dbReference type="EMDB" id="EMD-25421"/>
<dbReference type="EMDB" id="EMD-26486"/>
<dbReference type="EMDB" id="EMD-28165"/>
<dbReference type="EMDB" id="EMD-28197"/>
<dbReference type="EMDB" id="EMD-28254"/>
<dbReference type="EMDB" id="EMD-29214"/>
<dbReference type="EMDB" id="EMD-29449"/>
<dbReference type="EMDB" id="EMD-29620"/>
<dbReference type="EMDB" id="EMD-29621"/>
<dbReference type="EMDB" id="EMD-29624"/>
<dbReference type="EMDB" id="EMD-29627"/>
<dbReference type="EMDB" id="EMD-29628"/>
<dbReference type="EMDB" id="EMD-29631"/>
<dbReference type="EMDB" id="EMD-29634"/>
<dbReference type="EMDB" id="EMD-29786"/>
<dbReference type="EMDB" id="EMD-29787"/>
<dbReference type="EMDB" id="EMD-29788"/>
<dbReference type="EMDB" id="EMD-29819"/>
<dbReference type="EMDB" id="EMD-29820"/>
<dbReference type="EMDB" id="EMD-29821"/>
<dbReference type="EMDB" id="EMD-29822"/>
<dbReference type="EMDB" id="EMD-30215"/>
<dbReference type="EMDB" id="EMD-30598"/>
<dbReference type="EMDB" id="EMD-30611"/>
<dbReference type="EMDB" id="EMD-33660"/>
<dbReference type="EMDB" id="EMD-33661"/>
<dbReference type="EMDB" id="EMD-33662"/>
<dbReference type="EMDB" id="EMD-33663"/>
<dbReference type="EMDB" id="EMD-33664"/>
<dbReference type="EMDB" id="EMD-33665"/>
<dbReference type="EMDB" id="EMD-33904"/>
<dbReference type="EMDB" id="EMD-3489"/>
<dbReference type="EMDB" id="EMD-3490"/>
<dbReference type="EMDB" id="EMD-3492"/>
<dbReference type="EMDB" id="EMD-3493"/>
<dbReference type="EMDB" id="EMD-35001"/>
<dbReference type="EMDB" id="EMD-35020"/>
<dbReference type="EMDB" id="EMD-35022"/>
<dbReference type="EMDB" id="EMD-3508"/>
<dbReference type="EMDB" id="EMD-35411"/>
<dbReference type="EMDB" id="EMD-35412"/>
<dbReference type="EMDB" id="EMD-35939"/>
<dbReference type="EMDB" id="EMD-3617"/>
<dbReference type="EMDB" id="EMD-3713"/>
<dbReference type="EMDB" id="EMD-37271"/>
<dbReference type="EMDB" id="EMD-3730"/>
<dbReference type="EMDB" id="EMD-3898"/>
<dbReference type="EMDB" id="EMD-3899"/>
<dbReference type="EMDB" id="EMD-3903"/>
<dbReference type="EMDB" id="EMD-39577"/>
<dbReference type="EMDB" id="EMD-39578"/>
<dbReference type="EMDB" id="EMD-39579"/>
<dbReference type="EMDB" id="EMD-39580"/>
<dbReference type="EMDB" id="EMD-39581"/>
<dbReference type="EMDB" id="EMD-4001"/>
<dbReference type="EMDB" id="EMD-40882"/>
<dbReference type="EMDB" id="EMD-4121"/>
<dbReference type="EMDB" id="EMD-4122"/>
<dbReference type="EMDB" id="EMD-4123"/>
<dbReference type="EMDB" id="EMD-4124"/>
<dbReference type="EMDB" id="EMD-4125"/>
<dbReference type="EMDB" id="EMD-4126"/>
<dbReference type="EMDB" id="EMD-42453"/>
<dbReference type="EMDB" id="EMD-42454"/>
<dbReference type="EMDB" id="EMD-42473"/>
<dbReference type="EMDB" id="EMD-42474"/>
<dbReference type="EMDB" id="EMD-42477"/>
<dbReference type="EMDB" id="EMD-42479"/>
<dbReference type="EMDB" id="EMD-42492"/>
<dbReference type="EMDB" id="EMD-42493"/>
<dbReference type="EMDB" id="EMD-42503"/>
<dbReference type="EMDB" id="EMD-43490"/>
<dbReference type="EMDB" id="EMD-43491"/>
<dbReference type="EMDB" id="EMD-4378"/>
<dbReference type="EMDB" id="EMD-4379"/>
<dbReference type="EMDB" id="EMD-4380"/>
<dbReference type="EMDB" id="EMD-4383"/>
<dbReference type="EMDB" id="EMD-4476"/>
<dbReference type="EMDB" id="EMD-4477"/>
<dbReference type="EMDB" id="EMD-4478"/>
<dbReference type="EMDB" id="EMD-4638"/>
<dbReference type="EMDB" id="EMD-50296"/>
<dbReference type="EMDB" id="EMD-51318"/>
<dbReference type="EMDB" id="EMD-51340"/>
<dbReference type="EMDB" id="EMD-51833"/>
<dbReference type="EMDB" id="EMD-51834"/>
<dbReference type="EMDB" id="EMD-51835"/>
<dbReference type="EMDB" id="EMD-51836"/>
<dbReference type="EMDB" id="EMD-51839"/>
<dbReference type="EMDB" id="EMD-51840"/>
<dbReference type="EMDB" id="EMD-51841"/>
<dbReference type="EMDB" id="EMD-51842"/>
<dbReference type="EMDB" id="EMD-51843"/>
<dbReference type="EMDB" id="EMD-51976"/>
<dbReference type="EMDB" id="EMD-51978"/>
<dbReference type="EMDB" id="EMD-51979"/>
<dbReference type="EMDB" id="EMD-6667"/>
<dbReference type="EMDB" id="EMD-7289"/>
<dbReference type="EMDB" id="EMD-7340"/>
<dbReference type="EMDB" id="EMD-7341"/>
<dbReference type="EMDB" id="EMD-8000"/>
<dbReference type="EMDB" id="EMD-8001"/>
<dbReference type="EMDB" id="EMD-8002"/>
<dbReference type="EMDB" id="EMD-8003"/>
<dbReference type="EMDB" id="EMD-8004"/>
<dbReference type="EMDB" id="EMD-8107"/>
<dbReference type="EMDB" id="EMD-8175"/>
<dbReference type="EMDB" id="EMD-8176"/>
<dbReference type="EMDB" id="EMD-8237"/>
<dbReference type="EMDB" id="EMD-8238"/>
<dbReference type="EMDB" id="EMD-8279"/>
<dbReference type="EMDB" id="EMD-8280"/>
<dbReference type="EMDB" id="EMD-8281"/>
<dbReference type="EMDB" id="EMD-8282"/>
<dbReference type="EMDB" id="EMD-8505"/>
<dbReference type="EMDB" id="EMD-8615"/>
<dbReference type="EMDB" id="EMD-8616"/>
<dbReference type="EMDB" id="EMD-8617"/>
<dbReference type="EMDB" id="EMD-8618"/>
<dbReference type="EMDB" id="EMD-8619"/>
<dbReference type="EMDB" id="EMD-8620"/>
<dbReference type="EMDB" id="EMD-8813"/>
<dbReference type="EMDB" id="EMD-8814"/>
<dbReference type="EMDB" id="EMD-8815"/>
<dbReference type="EMDB" id="EMD-8828"/>
<dbReference type="SMR" id="P0A7L8"/>
<dbReference type="BioGRID" id="4261193">
    <property type="interactions" value="231"/>
</dbReference>
<dbReference type="BioGRID" id="849576">
    <property type="interactions" value="4"/>
</dbReference>
<dbReference type="ComplexPortal" id="CPX-3807">
    <property type="entry name" value="50S large ribosomal subunit"/>
</dbReference>
<dbReference type="DIP" id="DIP-47933N"/>
<dbReference type="FunCoup" id="P0A7L8">
    <property type="interactions" value="830"/>
</dbReference>
<dbReference type="IntAct" id="P0A7L8">
    <property type="interactions" value="41"/>
</dbReference>
<dbReference type="STRING" id="511145.b3185"/>
<dbReference type="jPOST" id="P0A7L8"/>
<dbReference type="PaxDb" id="511145-b3185"/>
<dbReference type="EnsemblBacteria" id="AAC76217">
    <property type="protein sequence ID" value="AAC76217"/>
    <property type="gene ID" value="b3185"/>
</dbReference>
<dbReference type="GeneID" id="93778796"/>
<dbReference type="GeneID" id="945190"/>
<dbReference type="KEGG" id="ecj:JW3152"/>
<dbReference type="KEGG" id="eco:b3185"/>
<dbReference type="KEGG" id="ecoc:C3026_17340"/>
<dbReference type="PATRIC" id="fig|1411691.4.peg.3546"/>
<dbReference type="EchoBASE" id="EB4296"/>
<dbReference type="eggNOG" id="COG0211">
    <property type="taxonomic scope" value="Bacteria"/>
</dbReference>
<dbReference type="HOGENOM" id="CLU_095424_4_1_6"/>
<dbReference type="InParanoid" id="P0A7L8"/>
<dbReference type="OMA" id="GKDHTLH"/>
<dbReference type="OrthoDB" id="9803474at2"/>
<dbReference type="PhylomeDB" id="P0A7L8"/>
<dbReference type="BioCyc" id="EcoCyc:EG50002-MONOMER"/>
<dbReference type="BioCyc" id="MetaCyc:EG50002-MONOMER"/>
<dbReference type="EvolutionaryTrace" id="P0A7L8"/>
<dbReference type="PRO" id="PR:P0A7L8"/>
<dbReference type="Proteomes" id="UP000000625">
    <property type="component" value="Chromosome"/>
</dbReference>
<dbReference type="GO" id="GO:0005737">
    <property type="term" value="C:cytoplasm"/>
    <property type="evidence" value="ECO:0000314"/>
    <property type="project" value="ComplexPortal"/>
</dbReference>
<dbReference type="GO" id="GO:0022625">
    <property type="term" value="C:cytosolic large ribosomal subunit"/>
    <property type="evidence" value="ECO:0000314"/>
    <property type="project" value="CAFA"/>
</dbReference>
<dbReference type="GO" id="GO:0043022">
    <property type="term" value="F:ribosome binding"/>
    <property type="evidence" value="ECO:0000314"/>
    <property type="project" value="CAFA"/>
</dbReference>
<dbReference type="GO" id="GO:0019843">
    <property type="term" value="F:rRNA binding"/>
    <property type="evidence" value="ECO:0007669"/>
    <property type="project" value="UniProtKB-KW"/>
</dbReference>
<dbReference type="GO" id="GO:0003735">
    <property type="term" value="F:structural constituent of ribosome"/>
    <property type="evidence" value="ECO:0000314"/>
    <property type="project" value="CAFA"/>
</dbReference>
<dbReference type="GO" id="GO:0000049">
    <property type="term" value="F:tRNA binding"/>
    <property type="evidence" value="ECO:0007669"/>
    <property type="project" value="UniProtKB-KW"/>
</dbReference>
<dbReference type="GO" id="GO:1902626">
    <property type="term" value="P:assembly of large subunit precursor of preribosome"/>
    <property type="evidence" value="ECO:0000316"/>
    <property type="project" value="CAFA"/>
</dbReference>
<dbReference type="GO" id="GO:0002181">
    <property type="term" value="P:cytoplasmic translation"/>
    <property type="evidence" value="ECO:0000303"/>
    <property type="project" value="ComplexPortal"/>
</dbReference>
<dbReference type="GO" id="GO:0042256">
    <property type="term" value="P:cytosolic ribosome assembly"/>
    <property type="evidence" value="ECO:0000315"/>
    <property type="project" value="EcoCyc"/>
</dbReference>
<dbReference type="GO" id="GO:0090070">
    <property type="term" value="P:positive regulation of ribosome biogenesis"/>
    <property type="evidence" value="ECO:0000316"/>
    <property type="project" value="CAFA"/>
</dbReference>
<dbReference type="GO" id="GO:0001558">
    <property type="term" value="P:regulation of cell growth"/>
    <property type="evidence" value="ECO:0000316"/>
    <property type="project" value="CAFA"/>
</dbReference>
<dbReference type="GO" id="GO:0000027">
    <property type="term" value="P:ribosomal large subunit assembly"/>
    <property type="evidence" value="ECO:0000314"/>
    <property type="project" value="CAFA"/>
</dbReference>
<dbReference type="FunFam" id="2.40.50.100:FF:000001">
    <property type="entry name" value="50S ribosomal protein L27"/>
    <property type="match status" value="1"/>
</dbReference>
<dbReference type="Gene3D" id="2.40.50.100">
    <property type="match status" value="1"/>
</dbReference>
<dbReference type="HAMAP" id="MF_00539">
    <property type="entry name" value="Ribosomal_bL27"/>
    <property type="match status" value="1"/>
</dbReference>
<dbReference type="InterPro" id="IPR001684">
    <property type="entry name" value="Ribosomal_bL27"/>
</dbReference>
<dbReference type="InterPro" id="IPR018261">
    <property type="entry name" value="Ribosomal_bL27_CS"/>
</dbReference>
<dbReference type="NCBIfam" id="TIGR00062">
    <property type="entry name" value="L27"/>
    <property type="match status" value="1"/>
</dbReference>
<dbReference type="PANTHER" id="PTHR15893:SF0">
    <property type="entry name" value="LARGE RIBOSOMAL SUBUNIT PROTEIN BL27M"/>
    <property type="match status" value="1"/>
</dbReference>
<dbReference type="PANTHER" id="PTHR15893">
    <property type="entry name" value="RIBOSOMAL PROTEIN L27"/>
    <property type="match status" value="1"/>
</dbReference>
<dbReference type="Pfam" id="PF01016">
    <property type="entry name" value="Ribosomal_L27"/>
    <property type="match status" value="1"/>
</dbReference>
<dbReference type="PRINTS" id="PR00063">
    <property type="entry name" value="RIBOSOMALL27"/>
</dbReference>
<dbReference type="SUPFAM" id="SSF110324">
    <property type="entry name" value="Ribosomal L27 protein-like"/>
    <property type="match status" value="1"/>
</dbReference>
<dbReference type="PROSITE" id="PS00831">
    <property type="entry name" value="RIBOSOMAL_L27"/>
    <property type="match status" value="1"/>
</dbReference>
<sequence>MAHKKAGGSTRNGRDSEAKRLGVKRFGGESVLAGSIIVRQRGTKFHAGANVGCGRDHTLFAKADGKVKFEVKGPKNRKFISIEAE</sequence>
<accession>P0A7L8</accession>
<accession>P02427</accession>
<accession>Q2M927</accession>
<organism>
    <name type="scientific">Escherichia coli (strain K12)</name>
    <dbReference type="NCBI Taxonomy" id="83333"/>
    <lineage>
        <taxon>Bacteria</taxon>
        <taxon>Pseudomonadati</taxon>
        <taxon>Pseudomonadota</taxon>
        <taxon>Gammaproteobacteria</taxon>
        <taxon>Enterobacterales</taxon>
        <taxon>Enterobacteriaceae</taxon>
        <taxon>Escherichia</taxon>
    </lineage>
</organism>
<name>RL27_ECOLI</name>
<gene>
    <name type="primary">rpmA</name>
    <name type="ordered locus">b3185</name>
    <name type="ordered locus">JW3152</name>
</gene>
<keyword id="KW-0002">3D-structure</keyword>
<keyword id="KW-0903">Direct protein sequencing</keyword>
<keyword id="KW-1185">Reference proteome</keyword>
<keyword id="KW-0687">Ribonucleoprotein</keyword>
<keyword id="KW-0689">Ribosomal protein</keyword>
<keyword id="KW-0694">RNA-binding</keyword>
<keyword id="KW-0699">rRNA-binding</keyword>
<keyword id="KW-0820">tRNA-binding</keyword>
<comment type="subunit">
    <text evidence="2 3 4 5 6 7 8 9 10 11 12 13">Part of the 50S ribosomal subunit (PubMed:10094780, PubMed:1225626, PubMed:12809609, PubMed:16272117, PubMed:24844575, PubMed:25310980, PubMed:27906160, PubMed:27906161, PubMed:27934701). Cross-links to the 23S rRNA (PubMed:6170935, PubMed:7556101). Cross-links to the A and P site tRNAs (PubMed:8524654).</text>
</comment>
<comment type="interaction">
    <interactant intactId="EBI-546875">
        <id>P0A7L8</id>
    </interactant>
    <interactant intactId="EBI-1120353">
        <id>Q46864</id>
        <label>mqsA</label>
    </interactant>
    <organismsDiffer>false</organismsDiffer>
    <experiments>2</experiments>
</comment>
<comment type="mass spectrometry"/>
<comment type="similarity">
    <text evidence="15">Belongs to the bacterial ribosomal protein bL27 family.</text>
</comment>
<reference key="1">
    <citation type="journal article" date="1993" name="DNA Seq.">
        <title>Cloning and nucleotide sequencing of the genes, rpIU and rpmA, for ribosomal proteins L21 and L27 of Escherichia coli.</title>
        <authorList>
            <person name="Jeong J.H."/>
            <person name="Kitakawa M.S."/>
            <person name="Isono S."/>
            <person name="Isono K."/>
        </authorList>
    </citation>
    <scope>NUCLEOTIDE SEQUENCE [GENOMIC DNA]</scope>
    <source>
        <strain>K12 / W3110 / ATCC 27325 / DSM 5911</strain>
    </source>
</reference>
<reference key="2">
    <citation type="journal article" date="1997" name="Science">
        <title>The complete genome sequence of Escherichia coli K-12.</title>
        <authorList>
            <person name="Blattner F.R."/>
            <person name="Plunkett G. III"/>
            <person name="Bloch C.A."/>
            <person name="Perna N.T."/>
            <person name="Burland V."/>
            <person name="Riley M."/>
            <person name="Collado-Vides J."/>
            <person name="Glasner J.D."/>
            <person name="Rode C.K."/>
            <person name="Mayhew G.F."/>
            <person name="Gregor J."/>
            <person name="Davis N.W."/>
            <person name="Kirkpatrick H.A."/>
            <person name="Goeden M.A."/>
            <person name="Rose D.J."/>
            <person name="Mau B."/>
            <person name="Shao Y."/>
        </authorList>
    </citation>
    <scope>NUCLEOTIDE SEQUENCE [LARGE SCALE GENOMIC DNA]</scope>
    <source>
        <strain>K12 / MG1655 / ATCC 47076</strain>
    </source>
</reference>
<reference key="3">
    <citation type="journal article" date="2006" name="Mol. Syst. Biol.">
        <title>Highly accurate genome sequences of Escherichia coli K-12 strains MG1655 and W3110.</title>
        <authorList>
            <person name="Hayashi K."/>
            <person name="Morooka N."/>
            <person name="Yamamoto Y."/>
            <person name="Fujita K."/>
            <person name="Isono K."/>
            <person name="Choi S."/>
            <person name="Ohtsubo E."/>
            <person name="Baba T."/>
            <person name="Wanner B.L."/>
            <person name="Mori H."/>
            <person name="Horiuchi T."/>
        </authorList>
    </citation>
    <scope>NUCLEOTIDE SEQUENCE [LARGE SCALE GENOMIC DNA]</scope>
    <source>
        <strain>K12 / W3110 / ATCC 27325 / DSM 5911</strain>
    </source>
</reference>
<reference key="4">
    <citation type="journal article" date="1975" name="FEBS Lett.">
        <title>The primary structure of protein L27 from the peptidyl-tRNA binding site of Escherichia coli ribosomes.</title>
        <authorList>
            <person name="Chen R."/>
            <person name="Mende L."/>
            <person name="Arfsten U."/>
        </authorList>
    </citation>
    <scope>PROTEIN SEQUENCE OF 2-85</scope>
    <scope>SUBUNIT</scope>
    <source>
        <strain>K12</strain>
    </source>
</reference>
<reference key="5">
    <citation type="journal article" date="1995" name="EMBO J.">
        <title>Protein-rRNA binding features and their structural and functional implications in ribosomes as determined by cross-linking studies.</title>
        <authorList>
            <person name="Urlaub H."/>
            <person name="Kruft V."/>
            <person name="Bischof O."/>
            <person name="Mueller E.-C."/>
            <person name="Wittmann-Liebold B."/>
        </authorList>
    </citation>
    <scope>PROTEIN SEQUENCE OF 67-78</scope>
    <scope>CROSS-LINKING TO RRNA</scope>
    <source>
        <strain>MRE-600</strain>
    </source>
</reference>
<reference key="6">
    <citation type="journal article" date="1981" name="Nucleic Acids Res.">
        <title>The use of 2-iminothiolane as an RNA-protein cross-linking agent in Escherichia coli ribosomes, and the localisation on 23S RNA of sites cross-linked to proteins L4, L6, L21, L23, L27 and L29.</title>
        <authorList>
            <person name="Wower I."/>
            <person name="Wower J."/>
            <person name="Meinke M."/>
            <person name="Brimacombe R."/>
        </authorList>
    </citation>
    <scope>CROSS-LINKING TO 23S RRNA</scope>
    <source>
        <strain>MRE-600</strain>
    </source>
</reference>
<reference key="7">
    <citation type="journal article" date="1995" name="Nucleic Acids Res.">
        <title>The ribosomal neighbourhood of the central fold of tRNA: cross-links from position 47 of tRNA located at the A, P or E site.</title>
        <authorList>
            <person name="Osswald M."/>
            <person name="Doering T."/>
            <person name="Brimacombe R."/>
        </authorList>
    </citation>
    <scope>CROSS-LINKING TO THE TRNA CENTRAL FOLD</scope>
    <source>
        <strain>MRE-600</strain>
    </source>
</reference>
<reference key="8">
    <citation type="journal article" date="1997" name="Electrophoresis">
        <title>Escherichia coli proteome analysis using the gene-protein database.</title>
        <authorList>
            <person name="VanBogelen R.A."/>
            <person name="Abshire K.Z."/>
            <person name="Moldover B."/>
            <person name="Olson E.R."/>
            <person name="Neidhardt F.C."/>
        </authorList>
    </citation>
    <scope>IDENTIFICATION BY 2D-GEL</scope>
</reference>
<reference key="9">
    <citation type="journal article" date="1999" name="Anal. Biochem.">
        <title>Observation of Escherichia coli ribosomal proteins and their posttranslational modifications by mass spectrometry.</title>
        <authorList>
            <person name="Arnold R.J."/>
            <person name="Reilly J.P."/>
        </authorList>
    </citation>
    <scope>MASS SPECTROMETRY</scope>
    <scope>SUBUNIT</scope>
    <source>
        <strain>K12 / ATCC 25404 / DSM 5698 / NCIMB 11290</strain>
    </source>
</reference>
<reference key="10">
    <citation type="journal article" date="2014" name="Curr. Opin. Struct. Biol.">
        <title>A new system for naming ribosomal proteins.</title>
        <authorList>
            <person name="Ban N."/>
            <person name="Beckmann R."/>
            <person name="Cate J.H.D."/>
            <person name="Dinman J.D."/>
            <person name="Dragon F."/>
            <person name="Ellis S.R."/>
            <person name="Lafontaine D.L.J."/>
            <person name="Lindahl L."/>
            <person name="Liljas A."/>
            <person name="Lipton J.M."/>
            <person name="McAlear M.A."/>
            <person name="Moore P.B."/>
            <person name="Noller H.F."/>
            <person name="Ortega J."/>
            <person name="Panse V.G."/>
            <person name="Ramakrishnan V."/>
            <person name="Spahn C.M.T."/>
            <person name="Steitz T.A."/>
            <person name="Tchorzewski M."/>
            <person name="Tollervey D."/>
            <person name="Warren A.J."/>
            <person name="Williamson J.R."/>
            <person name="Wilson D."/>
            <person name="Yonath A."/>
            <person name="Yusupov M."/>
        </authorList>
    </citation>
    <scope>NOMENCLATURE</scope>
</reference>
<reference key="11">
    <citation type="journal article" date="2003" name="Cell">
        <title>Study of the structural dynamics of the E. coli 70S ribosome using real-space refinement.</title>
        <authorList>
            <person name="Gao H."/>
            <person name="Sengupta J."/>
            <person name="Valle M."/>
            <person name="Korostelev A."/>
            <person name="Eswar N."/>
            <person name="Stagg S.M."/>
            <person name="Van Roey P."/>
            <person name="Agrawal R.K."/>
            <person name="Harvey S.C."/>
            <person name="Sali A."/>
            <person name="Chapman M.S."/>
            <person name="Frank J."/>
        </authorList>
    </citation>
    <scope>STRUCTURE BY ELECTRON MICROSCOPY (11.50 ANGSTROMS)</scope>
    <scope>SUBUNIT</scope>
    <source>
        <strain>MRE-600</strain>
    </source>
</reference>
<reference key="12">
    <citation type="journal article" date="2005" name="Science">
        <title>Structures of the bacterial ribosome at 3.5 A resolution.</title>
        <authorList>
            <person name="Schuwirth B.S."/>
            <person name="Borovinskaya M.A."/>
            <person name="Hau C.W."/>
            <person name="Zhang W."/>
            <person name="Vila-Sanjurjo A."/>
            <person name="Holton J.M."/>
            <person name="Cate J.H.D."/>
        </authorList>
    </citation>
    <scope>X-RAY CRYSTALLOGRAPHY (3.46 ANGSTROMS) OF 2 DIFFERENT RIBOSOME STRUCTURES</scope>
    <scope>SUBUNIT</scope>
    <source>
        <strain>MRE-600</strain>
    </source>
</reference>
<reference key="13">
    <citation type="journal article" date="2014" name="Cell Rep.">
        <title>Molecular basis for the ribosome functioning as an L-tryptophan sensor.</title>
        <authorList>
            <person name="Bischoff L."/>
            <person name="Berninghausen O."/>
            <person name="Beckmann R."/>
        </authorList>
    </citation>
    <scope>STRUCTURE BY ELECTRON MICROSCOPY (3.80 ANGSTROMS) OF 7-85 IN TNAC-STALLED 50S RIBOSOMAL SUBUNIT</scope>
    <scope>SUBUNIT</scope>
    <source>
        <strain>K12 / A19 / KC6</strain>
    </source>
</reference>
<reference key="14">
    <citation type="journal article" date="2014" name="PLoS Biol.">
        <title>Structural and functional insights into the mode of action of a universally conserved Obg GTPase.</title>
        <authorList>
            <person name="Feng B."/>
            <person name="Mandava C.S."/>
            <person name="Guo Q."/>
            <person name="Wang J."/>
            <person name="Cao W."/>
            <person name="Li N."/>
            <person name="Zhang Y."/>
            <person name="Zhang Y."/>
            <person name="Wang Z."/>
            <person name="Wu J."/>
            <person name="Sanyal S."/>
            <person name="Lei J."/>
            <person name="Gao N."/>
        </authorList>
    </citation>
    <scope>STRUCTURE BY ELECTRON MICROSCOPY (5.5 ANGSTROMS) OF 2-85 OF 50S RIBOSOMAL SUBUNIT IN COMPLEX WITH OBGE AND GMP-PNP</scope>
    <scope>SUBUNIT</scope>
</reference>
<reference key="15">
    <citation type="journal article" date="2017" name="Nature">
        <title>Mechanistic insights into the alternative translation termination by ArfA and RF2.</title>
        <authorList>
            <person name="Ma C."/>
            <person name="Kurita D."/>
            <person name="Li N."/>
            <person name="Chen Y."/>
            <person name="Himeno H."/>
            <person name="Gao N."/>
        </authorList>
    </citation>
    <scope>STRUCTURE BY ELECTRON MICROSCOPY (3.0 ANGSTROMS) OF 70S RIBOSOME IN COMPLEX WITH ARFA AND RF2</scope>
    <scope>SUBUNIT</scope>
</reference>
<reference key="16">
    <citation type="journal article" date="2017" name="Nature">
        <title>Structural basis for ArfA-RF2-mediated translation termination on mRNAs lacking stop codons.</title>
        <authorList>
            <person name="Huter P."/>
            <person name="Mueller C."/>
            <person name="Beckert B."/>
            <person name="Arenz S."/>
            <person name="Berninghausen O."/>
            <person name="Beckmann R."/>
            <person name="Wilson D.N."/>
        </authorList>
    </citation>
    <scope>STRUCTURE BY ELECTRON MICROSCOPY (3.1 ANGSTROMS) OF 70S RIBOSOME IN COMPLEX WITH ARFA AND RF2</scope>
    <scope>SUBUNIT</scope>
</reference>
<reference key="17">
    <citation type="journal article" date="2016" name="Science">
        <title>Translational termination without a stop codon.</title>
        <authorList>
            <person name="James N.R."/>
            <person name="Brown A."/>
            <person name="Gordiyenko Y."/>
            <person name="Ramakrishnan V."/>
        </authorList>
    </citation>
    <scope>STRUCTURE BY ELECTRON MICROSCOPY (2.97 ANGSTROMS) OF 70S RIBOSOME IN COMPLEX WITH ARFA AND RF2</scope>
    <scope>SUBUNIT</scope>
</reference>
<reference key="18">
    <citation type="journal article" date="2017" name="Nature">
        <title>Structural basis of co-translational quality control by ArfA and RF2 bound to ribosome.</title>
        <authorList>
            <person name="Zeng F."/>
            <person name="Chen Y."/>
            <person name="Remis J."/>
            <person name="Shekhar M."/>
            <person name="Phillips J.C."/>
            <person name="Tajkhorshid E."/>
            <person name="Jin H."/>
        </authorList>
    </citation>
    <scope>STRUCTURE BY ELECTRON MICROSCOPY (3.52 ANGSTROMS) OF 70S RIBOSOME IN COMPLEX WITH ARFA AND RF2</scope>
    <scope>SUBUNIT</scope>
</reference>
<evidence type="ECO:0000256" key="1">
    <source>
        <dbReference type="SAM" id="MobiDB-lite"/>
    </source>
</evidence>
<evidence type="ECO:0000269" key="2">
    <source>
    </source>
</evidence>
<evidence type="ECO:0000269" key="3">
    <source>
    </source>
</evidence>
<evidence type="ECO:0000269" key="4">
    <source>
    </source>
</evidence>
<evidence type="ECO:0000269" key="5">
    <source>
    </source>
</evidence>
<evidence type="ECO:0000269" key="6">
    <source>
    </source>
</evidence>
<evidence type="ECO:0000269" key="7">
    <source>
    </source>
</evidence>
<evidence type="ECO:0000269" key="8">
    <source>
    </source>
</evidence>
<evidence type="ECO:0000269" key="9">
    <source>
    </source>
</evidence>
<evidence type="ECO:0000269" key="10">
    <source>
    </source>
</evidence>
<evidence type="ECO:0000269" key="11">
    <source>
    </source>
</evidence>
<evidence type="ECO:0000269" key="12">
    <source>
    </source>
</evidence>
<evidence type="ECO:0000269" key="13">
    <source>
    </source>
</evidence>
<evidence type="ECO:0000303" key="14">
    <source>
    </source>
</evidence>
<evidence type="ECO:0000305" key="15"/>
<evidence type="ECO:0007829" key="16">
    <source>
        <dbReference type="PDB" id="8CGK"/>
    </source>
</evidence>
<feature type="initiator methionine" description="Removed" evidence="3">
    <location>
        <position position="1"/>
    </location>
</feature>
<feature type="chain" id="PRO_0000181085" description="Large ribosomal subunit protein bL27">
    <location>
        <begin position="2"/>
        <end position="85"/>
    </location>
</feature>
<feature type="region of interest" description="Disordered" evidence="1">
    <location>
        <begin position="1"/>
        <end position="20"/>
    </location>
</feature>
<feature type="strand" evidence="16">
    <location>
        <begin position="22"/>
        <end position="25"/>
    </location>
</feature>
<feature type="strand" evidence="16">
    <location>
        <begin position="36"/>
        <end position="39"/>
    </location>
</feature>
<feature type="strand" evidence="16">
    <location>
        <begin position="44"/>
        <end position="47"/>
    </location>
</feature>
<feature type="strand" evidence="16">
    <location>
        <begin position="51"/>
        <end position="53"/>
    </location>
</feature>
<feature type="strand" evidence="16">
    <location>
        <begin position="59"/>
        <end position="72"/>
    </location>
</feature>
<feature type="turn" evidence="16">
    <location>
        <begin position="73"/>
        <end position="76"/>
    </location>
</feature>
<feature type="strand" evidence="16">
    <location>
        <begin position="77"/>
        <end position="84"/>
    </location>
</feature>
<protein>
    <recommendedName>
        <fullName evidence="14">Large ribosomal subunit protein bL27</fullName>
    </recommendedName>
    <alternativeName>
        <fullName>50S ribosomal protein L27</fullName>
    </alternativeName>
</protein>